<evidence type="ECO:0000255" key="1">
    <source>
        <dbReference type="HAMAP-Rule" id="MF_01343"/>
    </source>
</evidence>
<evidence type="ECO:0000269" key="2">
    <source>
    </source>
</evidence>
<evidence type="ECO:0000269" key="3">
    <source>
    </source>
</evidence>
<evidence type="ECO:0000269" key="4">
    <source>
    </source>
</evidence>
<evidence type="ECO:0000269" key="5">
    <source>
    </source>
</evidence>
<evidence type="ECO:0000269" key="6">
    <source>
    </source>
</evidence>
<evidence type="ECO:0000269" key="7">
    <source>
    </source>
</evidence>
<evidence type="ECO:0000269" key="8">
    <source>
    </source>
</evidence>
<evidence type="ECO:0000269" key="9">
    <source>
    </source>
</evidence>
<evidence type="ECO:0000269" key="10">
    <source>
    </source>
</evidence>
<evidence type="ECO:0000269" key="11">
    <source>
    </source>
</evidence>
<evidence type="ECO:0000303" key="12">
    <source>
    </source>
</evidence>
<evidence type="ECO:0007829" key="13">
    <source>
        <dbReference type="PDB" id="8CGJ"/>
    </source>
</evidence>
<accession>P0ADZ4</accession>
<accession>P02371</accession>
<accession>Q2M945</accession>
<feature type="initiator methionine" description="Removed" evidence="11">
    <location>
        <position position="1"/>
    </location>
</feature>
<feature type="chain" id="PRO_0000115437" description="Small ribosomal subunit protein uS15">
    <location>
        <begin position="2"/>
        <end position="89"/>
    </location>
</feature>
<feature type="helix" evidence="13">
    <location>
        <begin position="5"/>
        <end position="15"/>
    </location>
</feature>
<feature type="strand" evidence="13">
    <location>
        <begin position="16"/>
        <end position="20"/>
    </location>
</feature>
<feature type="helix" evidence="13">
    <location>
        <begin position="25"/>
        <end position="45"/>
    </location>
</feature>
<feature type="helix" evidence="13">
    <location>
        <begin position="50"/>
        <end position="73"/>
    </location>
</feature>
<feature type="helix" evidence="13">
    <location>
        <begin position="75"/>
        <end position="85"/>
    </location>
</feature>
<sequence>MSLSTEATAKIVSEFGRDANDTGSTEVQVALLTAQINHLQGHFAEHKKDHHSRRGLLRMVSQRRKLLDYLKRKDVARYTQLIERLGLRR</sequence>
<protein>
    <recommendedName>
        <fullName evidence="1 12">Small ribosomal subunit protein uS15</fullName>
    </recommendedName>
    <alternativeName>
        <fullName>30S ribosomal protein S15</fullName>
    </alternativeName>
</protein>
<keyword id="KW-0002">3D-structure</keyword>
<keyword id="KW-0903">Direct protein sequencing</keyword>
<keyword id="KW-1185">Reference proteome</keyword>
<keyword id="KW-0687">Ribonucleoprotein</keyword>
<keyword id="KW-0689">Ribosomal protein</keyword>
<keyword id="KW-0694">RNA-binding</keyword>
<keyword id="KW-0699">rRNA-binding</keyword>
<keyword id="KW-0810">Translation regulation</keyword>
<gene>
    <name evidence="1" type="primary">rpsO</name>
    <name type="synonym">secC</name>
    <name type="ordered locus">b3165</name>
    <name type="ordered locus">JW3134</name>
</gene>
<proteinExistence type="evidence at protein level"/>
<comment type="function">
    <text evidence="4 5 6">One of the primary rRNA binding proteins, it binds directly to 16S rRNA where it helps nucleate assembly of the platform of the 30S subunit by binding and bridging several RNA helices of the 16S rRNA (PubMed:12809609, PubMed:16272117). Binds to its own mRNA, stabilizing it 5-UTR and preventing its translation (PubMed:24339747).</text>
</comment>
<comment type="function">
    <text evidence="3 4 5">In the E.coli 70S ribosome it has been modeled (PubMed:12809609) to contact the 23S rRNA of the 50S subunit forming part of bridge B4. In the two 3.5 A resolved ribosome structures (PubMed:16272117) there are minor differences between side-chain conformations.</text>
</comment>
<comment type="subunit">
    <text evidence="2 3 4 5 7 8 9 11">Part of the 30S ribosomal subunit (PubMed:10094780, PubMed:12244297, PubMed:12809609, PubMed:16272117, PubMed:27906160, PubMed:27906161, PubMed:27934701, PubMed:776686). Forms a bridge to the 50S subunit in the 70S ribosome, contacting the 23S rRNA (PubMed:12809609, PubMed:16272117).</text>
</comment>
<comment type="induction">
    <text evidence="10">Part of the metY operon that extends to pnp, also has its own promoter (PubMed:2849753).</text>
</comment>
<comment type="mass spectrometry"/>
<comment type="similarity">
    <text evidence="1">Belongs to the universal ribosomal protein uS15 family.</text>
</comment>
<organism>
    <name type="scientific">Escherichia coli (strain K12)</name>
    <dbReference type="NCBI Taxonomy" id="83333"/>
    <lineage>
        <taxon>Bacteria</taxon>
        <taxon>Pseudomonadati</taxon>
        <taxon>Pseudomonadota</taxon>
        <taxon>Gammaproteobacteria</taxon>
        <taxon>Enterobacterales</taxon>
        <taxon>Enterobacteriaceae</taxon>
        <taxon>Escherichia</taxon>
    </lineage>
</organism>
<dbReference type="EMBL" id="X01073">
    <property type="protein sequence ID" value="CAA25536.1"/>
    <property type="molecule type" value="Genomic_DNA"/>
</dbReference>
<dbReference type="EMBL" id="X00761">
    <property type="protein sequence ID" value="CAA25331.1"/>
    <property type="molecule type" value="Genomic_DNA"/>
</dbReference>
<dbReference type="EMBL" id="M14425">
    <property type="protein sequence ID" value="AAA24595.1"/>
    <property type="molecule type" value="Genomic_DNA"/>
</dbReference>
<dbReference type="EMBL" id="J02638">
    <property type="protein sequence ID" value="AAA83904.1"/>
    <property type="molecule type" value="Genomic_DNA"/>
</dbReference>
<dbReference type="EMBL" id="U18997">
    <property type="protein sequence ID" value="AAA57968.1"/>
    <property type="molecule type" value="Genomic_DNA"/>
</dbReference>
<dbReference type="EMBL" id="U00096">
    <property type="protein sequence ID" value="AAC76199.1"/>
    <property type="molecule type" value="Genomic_DNA"/>
</dbReference>
<dbReference type="EMBL" id="AP009048">
    <property type="protein sequence ID" value="BAE77211.1"/>
    <property type="molecule type" value="Genomic_DNA"/>
</dbReference>
<dbReference type="EMBL" id="X13775">
    <property type="protein sequence ID" value="CAA32022.1"/>
    <property type="molecule type" value="Genomic_DNA"/>
</dbReference>
<dbReference type="PIR" id="B26118">
    <property type="entry name" value="R3EC15"/>
</dbReference>
<dbReference type="RefSeq" id="NP_417634.1">
    <property type="nucleotide sequence ID" value="NC_000913.3"/>
</dbReference>
<dbReference type="RefSeq" id="WP_000059466.1">
    <property type="nucleotide sequence ID" value="NZ_STEB01000012.1"/>
</dbReference>
<dbReference type="PDB" id="1EG0">
    <property type="method" value="EM"/>
    <property type="resolution" value="11.50 A"/>
    <property type="chains" value="F=1-89"/>
</dbReference>
<dbReference type="PDB" id="2VAZ">
    <property type="method" value="EM"/>
    <property type="resolution" value="10.00 A"/>
    <property type="chains" value="F=2-89"/>
</dbReference>
<dbReference type="PDB" id="2YKR">
    <property type="method" value="EM"/>
    <property type="resolution" value="9.80 A"/>
    <property type="chains" value="O=2-89"/>
</dbReference>
<dbReference type="PDB" id="3IY8">
    <property type="method" value="EM"/>
    <property type="resolution" value="14.10 A"/>
    <property type="chains" value="O=2-89"/>
</dbReference>
<dbReference type="PDB" id="3J9Y">
    <property type="method" value="EM"/>
    <property type="resolution" value="3.90 A"/>
    <property type="chains" value="o=1-89"/>
</dbReference>
<dbReference type="PDB" id="3J9Z">
    <property type="method" value="EM"/>
    <property type="resolution" value="3.60 A"/>
    <property type="chains" value="SO=2-89"/>
</dbReference>
<dbReference type="PDB" id="3JA1">
    <property type="method" value="EM"/>
    <property type="resolution" value="3.60 A"/>
    <property type="chains" value="SO=2-89"/>
</dbReference>
<dbReference type="PDB" id="3JBU">
    <property type="method" value="EM"/>
    <property type="resolution" value="3.64 A"/>
    <property type="chains" value="O=1-89"/>
</dbReference>
<dbReference type="PDB" id="3JBV">
    <property type="method" value="EM"/>
    <property type="resolution" value="3.32 A"/>
    <property type="chains" value="O=1-89"/>
</dbReference>
<dbReference type="PDB" id="3JCD">
    <property type="method" value="EM"/>
    <property type="resolution" value="3.70 A"/>
    <property type="chains" value="o=1-89"/>
</dbReference>
<dbReference type="PDB" id="3JCE">
    <property type="method" value="EM"/>
    <property type="resolution" value="3.20 A"/>
    <property type="chains" value="o=1-89"/>
</dbReference>
<dbReference type="PDB" id="3JCJ">
    <property type="method" value="EM"/>
    <property type="resolution" value="3.70 A"/>
    <property type="chains" value="u=1-89"/>
</dbReference>
<dbReference type="PDB" id="3JCN">
    <property type="method" value="EM"/>
    <property type="resolution" value="4.60 A"/>
    <property type="chains" value="p=1-89"/>
</dbReference>
<dbReference type="PDB" id="4A2I">
    <property type="method" value="EM"/>
    <property type="resolution" value="16.50 A"/>
    <property type="chains" value="O=2-89"/>
</dbReference>
<dbReference type="PDB" id="4ADV">
    <property type="method" value="EM"/>
    <property type="resolution" value="13.50 A"/>
    <property type="chains" value="O=1-89"/>
</dbReference>
<dbReference type="PDB" id="4U1U">
    <property type="method" value="X-ray"/>
    <property type="resolution" value="2.95 A"/>
    <property type="chains" value="AO/CO=2-89"/>
</dbReference>
<dbReference type="PDB" id="4U1V">
    <property type="method" value="X-ray"/>
    <property type="resolution" value="3.00 A"/>
    <property type="chains" value="AO/CO=2-89"/>
</dbReference>
<dbReference type="PDB" id="4U20">
    <property type="method" value="X-ray"/>
    <property type="resolution" value="2.90 A"/>
    <property type="chains" value="AO/CO=2-89"/>
</dbReference>
<dbReference type="PDB" id="4U24">
    <property type="method" value="X-ray"/>
    <property type="resolution" value="2.90 A"/>
    <property type="chains" value="AO/CO=2-89"/>
</dbReference>
<dbReference type="PDB" id="4U25">
    <property type="method" value="X-ray"/>
    <property type="resolution" value="2.90 A"/>
    <property type="chains" value="AO/CO=2-89"/>
</dbReference>
<dbReference type="PDB" id="4U26">
    <property type="method" value="X-ray"/>
    <property type="resolution" value="2.80 A"/>
    <property type="chains" value="AO/CO=2-89"/>
</dbReference>
<dbReference type="PDB" id="4U27">
    <property type="method" value="X-ray"/>
    <property type="resolution" value="2.80 A"/>
    <property type="chains" value="AO/CO=2-89"/>
</dbReference>
<dbReference type="PDB" id="4V47">
    <property type="method" value="EM"/>
    <property type="resolution" value="12.30 A"/>
    <property type="chains" value="BO=2-89"/>
</dbReference>
<dbReference type="PDB" id="4V48">
    <property type="method" value="EM"/>
    <property type="resolution" value="11.50 A"/>
    <property type="chains" value="BO=2-89"/>
</dbReference>
<dbReference type="PDB" id="4V4H">
    <property type="method" value="X-ray"/>
    <property type="resolution" value="3.46 A"/>
    <property type="chains" value="AO/CO=1-89"/>
</dbReference>
<dbReference type="PDB" id="4V4Q">
    <property type="method" value="X-ray"/>
    <property type="resolution" value="3.46 A"/>
    <property type="chains" value="AO/CO=1-89"/>
</dbReference>
<dbReference type="PDB" id="4V4V">
    <property type="method" value="EM"/>
    <property type="resolution" value="15.00 A"/>
    <property type="chains" value="AO=3-88"/>
</dbReference>
<dbReference type="PDB" id="4V4W">
    <property type="method" value="EM"/>
    <property type="resolution" value="15.00 A"/>
    <property type="chains" value="AO=3-88"/>
</dbReference>
<dbReference type="PDB" id="4V50">
    <property type="method" value="X-ray"/>
    <property type="resolution" value="3.22 A"/>
    <property type="chains" value="AO/CO=2-89"/>
</dbReference>
<dbReference type="PDB" id="4V52">
    <property type="method" value="X-ray"/>
    <property type="resolution" value="3.21 A"/>
    <property type="chains" value="AO/CO=1-89"/>
</dbReference>
<dbReference type="PDB" id="4V53">
    <property type="method" value="X-ray"/>
    <property type="resolution" value="3.54 A"/>
    <property type="chains" value="AO/CO=1-89"/>
</dbReference>
<dbReference type="PDB" id="4V54">
    <property type="method" value="X-ray"/>
    <property type="resolution" value="3.30 A"/>
    <property type="chains" value="AO/CO=1-89"/>
</dbReference>
<dbReference type="PDB" id="4V55">
    <property type="method" value="X-ray"/>
    <property type="resolution" value="4.00 A"/>
    <property type="chains" value="AO/CO=1-89"/>
</dbReference>
<dbReference type="PDB" id="4V56">
    <property type="method" value="X-ray"/>
    <property type="resolution" value="3.93 A"/>
    <property type="chains" value="AO/CO=1-89"/>
</dbReference>
<dbReference type="PDB" id="4V57">
    <property type="method" value="X-ray"/>
    <property type="resolution" value="3.50 A"/>
    <property type="chains" value="AO/CO=1-89"/>
</dbReference>
<dbReference type="PDB" id="4V5B">
    <property type="method" value="X-ray"/>
    <property type="resolution" value="3.74 A"/>
    <property type="chains" value="BO/DO=1-89"/>
</dbReference>
<dbReference type="PDB" id="4V5H">
    <property type="method" value="EM"/>
    <property type="resolution" value="5.80 A"/>
    <property type="chains" value="AO=2-89"/>
</dbReference>
<dbReference type="PDB" id="4V5Y">
    <property type="method" value="X-ray"/>
    <property type="resolution" value="4.45 A"/>
    <property type="chains" value="AO/CO=1-89"/>
</dbReference>
<dbReference type="PDB" id="4V64">
    <property type="method" value="X-ray"/>
    <property type="resolution" value="3.50 A"/>
    <property type="chains" value="AO/CO=1-89"/>
</dbReference>
<dbReference type="PDB" id="4V65">
    <property type="method" value="EM"/>
    <property type="resolution" value="9.00 A"/>
    <property type="chains" value="AH=1-89"/>
</dbReference>
<dbReference type="PDB" id="4V66">
    <property type="method" value="EM"/>
    <property type="resolution" value="9.00 A"/>
    <property type="chains" value="AH=1-89"/>
</dbReference>
<dbReference type="PDB" id="4V69">
    <property type="method" value="EM"/>
    <property type="resolution" value="6.70 A"/>
    <property type="chains" value="AO=2-89"/>
</dbReference>
<dbReference type="PDB" id="4V6C">
    <property type="method" value="X-ray"/>
    <property type="resolution" value="3.19 A"/>
    <property type="chains" value="AO/CO=1-89"/>
</dbReference>
<dbReference type="PDB" id="4V6D">
    <property type="method" value="X-ray"/>
    <property type="resolution" value="3.81 A"/>
    <property type="chains" value="AO/CO=1-89"/>
</dbReference>
<dbReference type="PDB" id="4V6E">
    <property type="method" value="X-ray"/>
    <property type="resolution" value="3.71 A"/>
    <property type="chains" value="AO/CO=1-89"/>
</dbReference>
<dbReference type="PDB" id="4V6K">
    <property type="method" value="EM"/>
    <property type="resolution" value="8.25 A"/>
    <property type="chains" value="BS=1-89"/>
</dbReference>
<dbReference type="PDB" id="4V6L">
    <property type="method" value="EM"/>
    <property type="resolution" value="13.20 A"/>
    <property type="chains" value="AS=1-89"/>
</dbReference>
<dbReference type="PDB" id="4V6M">
    <property type="method" value="EM"/>
    <property type="chains" value="AM=2-89"/>
</dbReference>
<dbReference type="PDB" id="4V6N">
    <property type="method" value="EM"/>
    <property type="resolution" value="12.10 A"/>
    <property type="chains" value="BR=2-89"/>
</dbReference>
<dbReference type="PDB" id="4V6O">
    <property type="method" value="EM"/>
    <property type="resolution" value="14.70 A"/>
    <property type="chains" value="AR=2-89"/>
</dbReference>
<dbReference type="PDB" id="4V6P">
    <property type="method" value="EM"/>
    <property type="resolution" value="13.50 A"/>
    <property type="chains" value="AR=2-89"/>
</dbReference>
<dbReference type="PDB" id="4V6Q">
    <property type="method" value="EM"/>
    <property type="resolution" value="11.50 A"/>
    <property type="chains" value="AR=2-89"/>
</dbReference>
<dbReference type="PDB" id="4V6R">
    <property type="method" value="EM"/>
    <property type="resolution" value="11.50 A"/>
    <property type="chains" value="AR=2-89"/>
</dbReference>
<dbReference type="PDB" id="4V6S">
    <property type="method" value="EM"/>
    <property type="resolution" value="13.10 A"/>
    <property type="chains" value="BQ=2-89"/>
</dbReference>
<dbReference type="PDB" id="4V6T">
    <property type="method" value="EM"/>
    <property type="resolution" value="8.30 A"/>
    <property type="chains" value="AO=2-89"/>
</dbReference>
<dbReference type="PDB" id="4V6V">
    <property type="method" value="EM"/>
    <property type="resolution" value="9.80 A"/>
    <property type="chains" value="AO=2-89"/>
</dbReference>
<dbReference type="PDB" id="4V6Y">
    <property type="method" value="EM"/>
    <property type="resolution" value="12.00 A"/>
    <property type="chains" value="AO=1-89"/>
</dbReference>
<dbReference type="PDB" id="4V6Z">
    <property type="method" value="EM"/>
    <property type="resolution" value="12.00 A"/>
    <property type="chains" value="AO=1-89"/>
</dbReference>
<dbReference type="PDB" id="4V70">
    <property type="method" value="EM"/>
    <property type="resolution" value="17.00 A"/>
    <property type="chains" value="AO=1-89"/>
</dbReference>
<dbReference type="PDB" id="4V71">
    <property type="method" value="EM"/>
    <property type="resolution" value="20.00 A"/>
    <property type="chains" value="AO=1-89"/>
</dbReference>
<dbReference type="PDB" id="4V72">
    <property type="method" value="EM"/>
    <property type="resolution" value="13.00 A"/>
    <property type="chains" value="AO=1-89"/>
</dbReference>
<dbReference type="PDB" id="4V73">
    <property type="method" value="EM"/>
    <property type="resolution" value="15.00 A"/>
    <property type="chains" value="AO=1-89"/>
</dbReference>
<dbReference type="PDB" id="4V74">
    <property type="method" value="EM"/>
    <property type="resolution" value="17.00 A"/>
    <property type="chains" value="AO=1-89"/>
</dbReference>
<dbReference type="PDB" id="4V75">
    <property type="method" value="EM"/>
    <property type="resolution" value="12.00 A"/>
    <property type="chains" value="AO=1-89"/>
</dbReference>
<dbReference type="PDB" id="4V76">
    <property type="method" value="EM"/>
    <property type="resolution" value="17.00 A"/>
    <property type="chains" value="AO=1-89"/>
</dbReference>
<dbReference type="PDB" id="4V77">
    <property type="method" value="EM"/>
    <property type="resolution" value="17.00 A"/>
    <property type="chains" value="AO=1-89"/>
</dbReference>
<dbReference type="PDB" id="4V78">
    <property type="method" value="EM"/>
    <property type="resolution" value="20.00 A"/>
    <property type="chains" value="AO=1-89"/>
</dbReference>
<dbReference type="PDB" id="4V79">
    <property type="method" value="EM"/>
    <property type="resolution" value="15.00 A"/>
    <property type="chains" value="AO=1-89"/>
</dbReference>
<dbReference type="PDB" id="4V7A">
    <property type="method" value="EM"/>
    <property type="resolution" value="9.00 A"/>
    <property type="chains" value="AO=1-89"/>
</dbReference>
<dbReference type="PDB" id="4V7B">
    <property type="method" value="EM"/>
    <property type="resolution" value="6.80 A"/>
    <property type="chains" value="AO=1-89"/>
</dbReference>
<dbReference type="PDB" id="4V7C">
    <property type="method" value="EM"/>
    <property type="resolution" value="7.60 A"/>
    <property type="chains" value="AO=2-89"/>
</dbReference>
<dbReference type="PDB" id="4V7D">
    <property type="method" value="EM"/>
    <property type="resolution" value="7.60 A"/>
    <property type="chains" value="BO=2-89"/>
</dbReference>
<dbReference type="PDB" id="4V7I">
    <property type="method" value="EM"/>
    <property type="resolution" value="9.60 A"/>
    <property type="chains" value="BO=1-89"/>
</dbReference>
<dbReference type="PDB" id="4V7S">
    <property type="method" value="X-ray"/>
    <property type="resolution" value="3.25 A"/>
    <property type="chains" value="AO/CO=2-89"/>
</dbReference>
<dbReference type="PDB" id="4V7T">
    <property type="method" value="X-ray"/>
    <property type="resolution" value="3.19 A"/>
    <property type="chains" value="AO/CO=2-89"/>
</dbReference>
<dbReference type="PDB" id="4V7U">
    <property type="method" value="X-ray"/>
    <property type="resolution" value="3.10 A"/>
    <property type="chains" value="AO/CO=2-89"/>
</dbReference>
<dbReference type="PDB" id="4V7V">
    <property type="method" value="X-ray"/>
    <property type="resolution" value="3.29 A"/>
    <property type="chains" value="AO/CO=2-89"/>
</dbReference>
<dbReference type="PDB" id="4V85">
    <property type="method" value="X-ray"/>
    <property type="resolution" value="3.20 A"/>
    <property type="chains" value="AO=1-89"/>
</dbReference>
<dbReference type="PDB" id="4V89">
    <property type="method" value="X-ray"/>
    <property type="resolution" value="3.70 A"/>
    <property type="chains" value="AO=1-89"/>
</dbReference>
<dbReference type="PDB" id="4V9C">
    <property type="method" value="X-ray"/>
    <property type="resolution" value="3.30 A"/>
    <property type="chains" value="AO/CO=1-89"/>
</dbReference>
<dbReference type="PDB" id="4V9D">
    <property type="method" value="X-ray"/>
    <property type="resolution" value="3.00 A"/>
    <property type="chains" value="AO/BO=2-89"/>
</dbReference>
<dbReference type="PDB" id="4V9O">
    <property type="method" value="X-ray"/>
    <property type="resolution" value="2.90 A"/>
    <property type="chains" value="BO/DO/FO/HO=1-89"/>
</dbReference>
<dbReference type="PDB" id="4V9P">
    <property type="method" value="X-ray"/>
    <property type="resolution" value="2.90 A"/>
    <property type="chains" value="BO/DO/FO/HO=1-89"/>
</dbReference>
<dbReference type="PDB" id="4WF1">
    <property type="method" value="X-ray"/>
    <property type="resolution" value="3.09 A"/>
    <property type="chains" value="AO/CO=2-89"/>
</dbReference>
<dbReference type="PDB" id="4WWW">
    <property type="method" value="X-ray"/>
    <property type="resolution" value="3.10 A"/>
    <property type="chains" value="QO/XO=2-89"/>
</dbReference>
<dbReference type="PDB" id="4YBB">
    <property type="method" value="X-ray"/>
    <property type="resolution" value="2.10 A"/>
    <property type="chains" value="AO/BO=2-89"/>
</dbReference>
<dbReference type="PDB" id="5AFI">
    <property type="method" value="EM"/>
    <property type="resolution" value="2.90 A"/>
    <property type="chains" value="o=1-89"/>
</dbReference>
<dbReference type="PDB" id="5H5U">
    <property type="method" value="EM"/>
    <property type="resolution" value="3.00 A"/>
    <property type="chains" value="v=2-89"/>
</dbReference>
<dbReference type="PDB" id="5IQR">
    <property type="method" value="EM"/>
    <property type="resolution" value="3.00 A"/>
    <property type="chains" value="t=1-89"/>
</dbReference>
<dbReference type="PDB" id="5IT8">
    <property type="method" value="X-ray"/>
    <property type="resolution" value="3.12 A"/>
    <property type="chains" value="AO/BO=2-89"/>
</dbReference>
<dbReference type="PDB" id="5J5B">
    <property type="method" value="X-ray"/>
    <property type="resolution" value="2.80 A"/>
    <property type="chains" value="AO/BO=2-89"/>
</dbReference>
<dbReference type="PDB" id="5J7L">
    <property type="method" value="X-ray"/>
    <property type="resolution" value="3.00 A"/>
    <property type="chains" value="AO/BO=2-89"/>
</dbReference>
<dbReference type="PDB" id="5J88">
    <property type="method" value="X-ray"/>
    <property type="resolution" value="3.32 A"/>
    <property type="chains" value="AO/BO=2-89"/>
</dbReference>
<dbReference type="PDB" id="5J8A">
    <property type="method" value="X-ray"/>
    <property type="resolution" value="3.10 A"/>
    <property type="chains" value="AO/BO=2-89"/>
</dbReference>
<dbReference type="PDB" id="5J91">
    <property type="method" value="X-ray"/>
    <property type="resolution" value="2.96 A"/>
    <property type="chains" value="AO/BO=2-89"/>
</dbReference>
<dbReference type="PDB" id="5JC9">
    <property type="method" value="X-ray"/>
    <property type="resolution" value="3.03 A"/>
    <property type="chains" value="AO/BO=2-89"/>
</dbReference>
<dbReference type="PDB" id="5JTE">
    <property type="method" value="EM"/>
    <property type="resolution" value="3.60 A"/>
    <property type="chains" value="AO=1-89"/>
</dbReference>
<dbReference type="PDB" id="5JU8">
    <property type="method" value="EM"/>
    <property type="resolution" value="3.60 A"/>
    <property type="chains" value="AO=1-89"/>
</dbReference>
<dbReference type="PDB" id="5KCR">
    <property type="method" value="EM"/>
    <property type="resolution" value="3.60 A"/>
    <property type="chains" value="1o=1-89"/>
</dbReference>
<dbReference type="PDB" id="5KCS">
    <property type="method" value="EM"/>
    <property type="resolution" value="3.90 A"/>
    <property type="chains" value="1o=1-89"/>
</dbReference>
<dbReference type="PDB" id="5KPS">
    <property type="method" value="EM"/>
    <property type="resolution" value="3.90 A"/>
    <property type="chains" value="20=1-89"/>
</dbReference>
<dbReference type="PDB" id="5KPV">
    <property type="method" value="EM"/>
    <property type="resolution" value="4.10 A"/>
    <property type="chains" value="19=1-89"/>
</dbReference>
<dbReference type="PDB" id="5KPW">
    <property type="method" value="EM"/>
    <property type="resolution" value="3.90 A"/>
    <property type="chains" value="19=1-89"/>
</dbReference>
<dbReference type="PDB" id="5KPX">
    <property type="method" value="EM"/>
    <property type="resolution" value="3.90 A"/>
    <property type="chains" value="19=1-89"/>
</dbReference>
<dbReference type="PDB" id="5L3P">
    <property type="method" value="EM"/>
    <property type="resolution" value="3.70 A"/>
    <property type="chains" value="o=1-89"/>
</dbReference>
<dbReference type="PDB" id="5LZA">
    <property type="method" value="EM"/>
    <property type="resolution" value="3.60 A"/>
    <property type="chains" value="o=2-89"/>
</dbReference>
<dbReference type="PDB" id="5LZB">
    <property type="method" value="EM"/>
    <property type="resolution" value="5.30 A"/>
    <property type="chains" value="o=2-89"/>
</dbReference>
<dbReference type="PDB" id="5LZC">
    <property type="method" value="EM"/>
    <property type="resolution" value="4.80 A"/>
    <property type="chains" value="o=2-89"/>
</dbReference>
<dbReference type="PDB" id="5LZD">
    <property type="method" value="EM"/>
    <property type="resolution" value="3.40 A"/>
    <property type="chains" value="o=2-89"/>
</dbReference>
<dbReference type="PDB" id="5LZE">
    <property type="method" value="EM"/>
    <property type="resolution" value="3.50 A"/>
    <property type="chains" value="o=2-89"/>
</dbReference>
<dbReference type="PDB" id="5LZF">
    <property type="method" value="EM"/>
    <property type="resolution" value="4.60 A"/>
    <property type="chains" value="o=2-89"/>
</dbReference>
<dbReference type="PDB" id="5MDV">
    <property type="method" value="EM"/>
    <property type="resolution" value="2.97 A"/>
    <property type="chains" value="t=1-89"/>
</dbReference>
<dbReference type="PDB" id="5MDW">
    <property type="method" value="EM"/>
    <property type="resolution" value="3.06 A"/>
    <property type="chains" value="t=1-89"/>
</dbReference>
<dbReference type="PDB" id="5MDY">
    <property type="method" value="EM"/>
    <property type="resolution" value="3.35 A"/>
    <property type="chains" value="t=1-89"/>
</dbReference>
<dbReference type="PDB" id="5MDZ">
    <property type="method" value="EM"/>
    <property type="resolution" value="3.10 A"/>
    <property type="chains" value="t=1-89"/>
</dbReference>
<dbReference type="PDB" id="5ME0">
    <property type="method" value="EM"/>
    <property type="resolution" value="13.50 A"/>
    <property type="chains" value="O=1-89"/>
</dbReference>
<dbReference type="PDB" id="5ME1">
    <property type="method" value="EM"/>
    <property type="resolution" value="13.50 A"/>
    <property type="chains" value="O=1-89"/>
</dbReference>
<dbReference type="PDB" id="5MGP">
    <property type="method" value="EM"/>
    <property type="resolution" value="3.10 A"/>
    <property type="chains" value="o=2-89"/>
</dbReference>
<dbReference type="PDB" id="5MY1">
    <property type="method" value="EM"/>
    <property type="resolution" value="7.60 A"/>
    <property type="chains" value="O=1-89"/>
</dbReference>
<dbReference type="PDB" id="5NO2">
    <property type="method" value="EM"/>
    <property type="resolution" value="5.16 A"/>
    <property type="chains" value="O=2-89"/>
</dbReference>
<dbReference type="PDB" id="5NO3">
    <property type="method" value="EM"/>
    <property type="resolution" value="5.16 A"/>
    <property type="chains" value="O=2-89"/>
</dbReference>
<dbReference type="PDB" id="5NO4">
    <property type="method" value="EM"/>
    <property type="resolution" value="5.16 A"/>
    <property type="chains" value="O=2-89"/>
</dbReference>
<dbReference type="PDB" id="5NP6">
    <property type="method" value="EM"/>
    <property type="resolution" value="3.60 A"/>
    <property type="chains" value="R=2-89"/>
</dbReference>
<dbReference type="PDB" id="5NWY">
    <property type="method" value="EM"/>
    <property type="resolution" value="2.93 A"/>
    <property type="chains" value="E=1-89"/>
</dbReference>
<dbReference type="PDB" id="5O2R">
    <property type="method" value="EM"/>
    <property type="resolution" value="3.40 A"/>
    <property type="chains" value="o=2-89"/>
</dbReference>
<dbReference type="PDB" id="5U4I">
    <property type="method" value="EM"/>
    <property type="resolution" value="3.50 A"/>
    <property type="chains" value="o=2-89"/>
</dbReference>
<dbReference type="PDB" id="5U9F">
    <property type="method" value="EM"/>
    <property type="resolution" value="3.20 A"/>
    <property type="chains" value="O=1-89"/>
</dbReference>
<dbReference type="PDB" id="5U9G">
    <property type="method" value="EM"/>
    <property type="resolution" value="3.20 A"/>
    <property type="chains" value="O=1-89"/>
</dbReference>
<dbReference type="PDB" id="5UYK">
    <property type="method" value="EM"/>
    <property type="resolution" value="3.90 A"/>
    <property type="chains" value="O=2-89"/>
</dbReference>
<dbReference type="PDB" id="5UYL">
    <property type="method" value="EM"/>
    <property type="resolution" value="3.60 A"/>
    <property type="chains" value="O=2-89"/>
</dbReference>
<dbReference type="PDB" id="5UYM">
    <property type="method" value="EM"/>
    <property type="resolution" value="3.20 A"/>
    <property type="chains" value="O=2-89"/>
</dbReference>
<dbReference type="PDB" id="5UYN">
    <property type="method" value="EM"/>
    <property type="resolution" value="4.00 A"/>
    <property type="chains" value="O=2-89"/>
</dbReference>
<dbReference type="PDB" id="5UYP">
    <property type="method" value="EM"/>
    <property type="resolution" value="3.90 A"/>
    <property type="chains" value="O=2-89"/>
</dbReference>
<dbReference type="PDB" id="5UYQ">
    <property type="method" value="EM"/>
    <property type="resolution" value="3.80 A"/>
    <property type="chains" value="O=2-89"/>
</dbReference>
<dbReference type="PDB" id="5UZ4">
    <property type="method" value="EM"/>
    <property type="resolution" value="5.80 A"/>
    <property type="chains" value="O=1-89"/>
</dbReference>
<dbReference type="PDB" id="5WDT">
    <property type="method" value="EM"/>
    <property type="resolution" value="3.00 A"/>
    <property type="chains" value="o=2-89"/>
</dbReference>
<dbReference type="PDB" id="5WE4">
    <property type="method" value="EM"/>
    <property type="resolution" value="3.10 A"/>
    <property type="chains" value="o=2-89"/>
</dbReference>
<dbReference type="PDB" id="5WE6">
    <property type="method" value="EM"/>
    <property type="resolution" value="3.40 A"/>
    <property type="chains" value="o=2-89"/>
</dbReference>
<dbReference type="PDB" id="5WF0">
    <property type="method" value="EM"/>
    <property type="resolution" value="3.60 A"/>
    <property type="chains" value="o=2-89"/>
</dbReference>
<dbReference type="PDB" id="5WFK">
    <property type="method" value="EM"/>
    <property type="resolution" value="3.40 A"/>
    <property type="chains" value="o=2-89"/>
</dbReference>
<dbReference type="PDB" id="5WFS">
    <property type="method" value="EM"/>
    <property type="resolution" value="3.00 A"/>
    <property type="chains" value="o=2-89"/>
</dbReference>
<dbReference type="PDB" id="6AWB">
    <property type="method" value="EM"/>
    <property type="resolution" value="6.70 A"/>
    <property type="chains" value="R=2-89"/>
</dbReference>
<dbReference type="PDB" id="6AWC">
    <property type="method" value="EM"/>
    <property type="resolution" value="7.90 A"/>
    <property type="chains" value="R=2-89"/>
</dbReference>
<dbReference type="PDB" id="6AWD">
    <property type="method" value="EM"/>
    <property type="resolution" value="8.10 A"/>
    <property type="chains" value="R=2-89"/>
</dbReference>
<dbReference type="PDB" id="6BU8">
    <property type="method" value="EM"/>
    <property type="resolution" value="3.50 A"/>
    <property type="chains" value="O=2-89"/>
</dbReference>
<dbReference type="PDB" id="6BY1">
    <property type="method" value="X-ray"/>
    <property type="resolution" value="3.94 A"/>
    <property type="chains" value="AO/BO=1-89"/>
</dbReference>
<dbReference type="PDB" id="6C4I">
    <property type="method" value="EM"/>
    <property type="resolution" value="3.24 A"/>
    <property type="chains" value="o=1-89"/>
</dbReference>
<dbReference type="PDB" id="6DNC">
    <property type="method" value="EM"/>
    <property type="resolution" value="3.70 A"/>
    <property type="chains" value="BB=1-89"/>
</dbReference>
<dbReference type="PDB" id="6ENF">
    <property type="method" value="EM"/>
    <property type="resolution" value="3.20 A"/>
    <property type="chains" value="o=2-89"/>
</dbReference>
<dbReference type="PDB" id="6ENJ">
    <property type="method" value="EM"/>
    <property type="resolution" value="3.70 A"/>
    <property type="chains" value="o=2-89"/>
</dbReference>
<dbReference type="PDB" id="6ENU">
    <property type="method" value="EM"/>
    <property type="resolution" value="3.10 A"/>
    <property type="chains" value="o=2-89"/>
</dbReference>
<dbReference type="PDB" id="6GWT">
    <property type="method" value="EM"/>
    <property type="resolution" value="3.80 A"/>
    <property type="chains" value="o=2-89"/>
</dbReference>
<dbReference type="PDB" id="6GXM">
    <property type="method" value="EM"/>
    <property type="resolution" value="3.80 A"/>
    <property type="chains" value="o=2-89"/>
</dbReference>
<dbReference type="PDB" id="6GXN">
    <property type="method" value="EM"/>
    <property type="resolution" value="3.90 A"/>
    <property type="chains" value="o=2-89"/>
</dbReference>
<dbReference type="PDB" id="6GXO">
    <property type="method" value="EM"/>
    <property type="resolution" value="3.90 A"/>
    <property type="chains" value="o=2-89"/>
</dbReference>
<dbReference type="PDB" id="6GXP">
    <property type="method" value="EM"/>
    <property type="resolution" value="4.40 A"/>
    <property type="chains" value="o=2-89"/>
</dbReference>
<dbReference type="PDB" id="6H4N">
    <property type="method" value="EM"/>
    <property type="resolution" value="3.00 A"/>
    <property type="chains" value="o=2-89"/>
</dbReference>
<dbReference type="PDB" id="6H58">
    <property type="method" value="EM"/>
    <property type="resolution" value="7.90 A"/>
    <property type="chains" value="o/oo=2-89"/>
</dbReference>
<dbReference type="PDB" id="6HRM">
    <property type="method" value="EM"/>
    <property type="resolution" value="2.96 A"/>
    <property type="chains" value="t=2-89"/>
</dbReference>
<dbReference type="PDB" id="6NQB">
    <property type="method" value="EM"/>
    <property type="resolution" value="3.80 A"/>
    <property type="chains" value="O=3-88"/>
</dbReference>
<dbReference type="PDB" id="6O7K">
    <property type="method" value="EM"/>
    <property type="resolution" value="4.20 A"/>
    <property type="chains" value="u=2-89"/>
</dbReference>
<dbReference type="PDB" id="6O9J">
    <property type="method" value="EM"/>
    <property type="resolution" value="3.90 A"/>
    <property type="chains" value="o=2-89"/>
</dbReference>
<dbReference type="PDB" id="6O9K">
    <property type="method" value="EM"/>
    <property type="resolution" value="4.00 A"/>
    <property type="chains" value="o=2-89"/>
</dbReference>
<dbReference type="PDB" id="6OFX">
    <property type="method" value="EM"/>
    <property type="resolution" value="3.30 A"/>
    <property type="chains" value="T=2-89"/>
</dbReference>
<dbReference type="PDB" id="6OG7">
    <property type="method" value="EM"/>
    <property type="resolution" value="3.30 A"/>
    <property type="chains" value="T=2-89"/>
</dbReference>
<dbReference type="PDB" id="6OGF">
    <property type="method" value="EM"/>
    <property type="resolution" value="3.90 A"/>
    <property type="chains" value="T=1-89"/>
</dbReference>
<dbReference type="PDB" id="6OGG">
    <property type="method" value="EM"/>
    <property type="resolution" value="4.20 A"/>
    <property type="chains" value="T=1-89"/>
</dbReference>
<dbReference type="PDB" id="6OGI">
    <property type="method" value="EM"/>
    <property type="resolution" value="3.40 A"/>
    <property type="chains" value="T=1-89"/>
</dbReference>
<dbReference type="PDB" id="6OM6">
    <property type="method" value="EM"/>
    <property type="resolution" value="3.10 A"/>
    <property type="chains" value="t=1-89"/>
</dbReference>
<dbReference type="PDB" id="6ORE">
    <property type="method" value="EM"/>
    <property type="resolution" value="2.90 A"/>
    <property type="chains" value="t=2-89"/>
</dbReference>
<dbReference type="PDB" id="6ORL">
    <property type="method" value="EM"/>
    <property type="resolution" value="3.50 A"/>
    <property type="chains" value="t=2-89"/>
</dbReference>
<dbReference type="PDB" id="6OSK">
    <property type="method" value="EM"/>
    <property type="resolution" value="3.60 A"/>
    <property type="chains" value="t=2-89"/>
</dbReference>
<dbReference type="PDB" id="6OSQ">
    <property type="method" value="EM"/>
    <property type="resolution" value="3.50 A"/>
    <property type="chains" value="t=2-89"/>
</dbReference>
<dbReference type="PDB" id="6OST">
    <property type="method" value="EM"/>
    <property type="resolution" value="4.20 A"/>
    <property type="chains" value="t=2-89"/>
</dbReference>
<dbReference type="PDB" id="6OT3">
    <property type="method" value="EM"/>
    <property type="resolution" value="3.90 A"/>
    <property type="chains" value="t=2-89"/>
</dbReference>
<dbReference type="PDB" id="6OUO">
    <property type="method" value="EM"/>
    <property type="resolution" value="3.70 A"/>
    <property type="chains" value="t=2-89"/>
</dbReference>
<dbReference type="PDB" id="6Q97">
    <property type="method" value="EM"/>
    <property type="resolution" value="3.90 A"/>
    <property type="chains" value="t=3-89"/>
</dbReference>
<dbReference type="PDB" id="6Q98">
    <property type="method" value="EM"/>
    <property type="resolution" value="4.30 A"/>
    <property type="chains" value="t=1-89"/>
</dbReference>
<dbReference type="PDB" id="6Q9A">
    <property type="method" value="EM"/>
    <property type="resolution" value="3.70 A"/>
    <property type="chains" value="t=3-89"/>
</dbReference>
<dbReference type="PDB" id="6SZS">
    <property type="method" value="EM"/>
    <property type="resolution" value="3.06 A"/>
    <property type="chains" value="o=1-89"/>
</dbReference>
<dbReference type="PDB" id="6TBV">
    <property type="method" value="EM"/>
    <property type="resolution" value="2.70 A"/>
    <property type="chains" value="S151=1-89"/>
</dbReference>
<dbReference type="PDB" id="6TC3">
    <property type="method" value="EM"/>
    <property type="resolution" value="2.70 A"/>
    <property type="chains" value="S151=1-89"/>
</dbReference>
<dbReference type="PDB" id="6VU3">
    <property type="method" value="EM"/>
    <property type="resolution" value="3.70 A"/>
    <property type="chains" value="T=2-89"/>
</dbReference>
<dbReference type="PDB" id="6VWL">
    <property type="method" value="EM"/>
    <property type="resolution" value="3.10 A"/>
    <property type="chains" value="n=1-89"/>
</dbReference>
<dbReference type="PDB" id="6VWM">
    <property type="method" value="EM"/>
    <property type="resolution" value="3.40 A"/>
    <property type="chains" value="n=1-89"/>
</dbReference>
<dbReference type="PDB" id="6VWN">
    <property type="method" value="EM"/>
    <property type="resolution" value="3.40 A"/>
    <property type="chains" value="n=1-89"/>
</dbReference>
<dbReference type="PDB" id="6VYQ">
    <property type="method" value="EM"/>
    <property type="resolution" value="3.70 A"/>
    <property type="chains" value="T=1-89"/>
</dbReference>
<dbReference type="PDB" id="6VYR">
    <property type="method" value="EM"/>
    <property type="resolution" value="3.80 A"/>
    <property type="chains" value="T=1-89"/>
</dbReference>
<dbReference type="PDB" id="6VYS">
    <property type="method" value="EM"/>
    <property type="resolution" value="3.70 A"/>
    <property type="chains" value="T=1-89"/>
</dbReference>
<dbReference type="PDB" id="6VYT">
    <property type="method" value="EM"/>
    <property type="resolution" value="14.00 A"/>
    <property type="chains" value="T=1-89"/>
</dbReference>
<dbReference type="PDB" id="6VYU">
    <property type="method" value="EM"/>
    <property type="resolution" value="7.00 A"/>
    <property type="chains" value="T=1-89"/>
</dbReference>
<dbReference type="PDB" id="6VYW">
    <property type="method" value="EM"/>
    <property type="resolution" value="7.00 A"/>
    <property type="chains" value="T=1-89"/>
</dbReference>
<dbReference type="PDB" id="6VYX">
    <property type="method" value="EM"/>
    <property type="resolution" value="9.90 A"/>
    <property type="chains" value="T=1-89"/>
</dbReference>
<dbReference type="PDB" id="6VYY">
    <property type="method" value="EM"/>
    <property type="resolution" value="9.90 A"/>
    <property type="chains" value="T=1-89"/>
</dbReference>
<dbReference type="PDB" id="6VYZ">
    <property type="method" value="EM"/>
    <property type="resolution" value="9.90 A"/>
    <property type="chains" value="T=1-89"/>
</dbReference>
<dbReference type="PDB" id="6VZ2">
    <property type="method" value="EM"/>
    <property type="resolution" value="10.00 A"/>
    <property type="chains" value="T=1-89"/>
</dbReference>
<dbReference type="PDB" id="6VZ3">
    <property type="method" value="EM"/>
    <property type="resolution" value="8.90 A"/>
    <property type="chains" value="T=2-89"/>
</dbReference>
<dbReference type="PDB" id="6VZ5">
    <property type="method" value="EM"/>
    <property type="resolution" value="8.90 A"/>
    <property type="chains" value="T=1-89"/>
</dbReference>
<dbReference type="PDB" id="6VZ7">
    <property type="method" value="EM"/>
    <property type="resolution" value="7.00 A"/>
    <property type="chains" value="T=2-89"/>
</dbReference>
<dbReference type="PDB" id="6VZJ">
    <property type="method" value="EM"/>
    <property type="resolution" value="4.10 A"/>
    <property type="chains" value="T=1-89"/>
</dbReference>
<dbReference type="PDB" id="6W6K">
    <property type="method" value="EM"/>
    <property type="resolution" value="3.60 A"/>
    <property type="chains" value="O=1-89"/>
</dbReference>
<dbReference type="PDB" id="6W77">
    <property type="method" value="EM"/>
    <property type="resolution" value="3.60 A"/>
    <property type="chains" value="O=1-89"/>
</dbReference>
<dbReference type="PDB" id="6W7M">
    <property type="method" value="EM"/>
    <property type="resolution" value="3.80 A"/>
    <property type="chains" value="O=1-89"/>
</dbReference>
<dbReference type="PDB" id="6W7N">
    <property type="method" value="EM"/>
    <property type="resolution" value="3.40 A"/>
    <property type="chains" value="O=1-89"/>
</dbReference>
<dbReference type="PDB" id="6W7W">
    <property type="method" value="EM"/>
    <property type="resolution" value="3.90 A"/>
    <property type="chains" value="N=1-89"/>
</dbReference>
<dbReference type="PDB" id="6WD0">
    <property type="method" value="EM"/>
    <property type="resolution" value="3.00 A"/>
    <property type="chains" value="T=2-89"/>
</dbReference>
<dbReference type="PDB" id="6WD1">
    <property type="method" value="EM"/>
    <property type="resolution" value="3.30 A"/>
    <property type="chains" value="T=2-89"/>
</dbReference>
<dbReference type="PDB" id="6WD2">
    <property type="method" value="EM"/>
    <property type="resolution" value="3.60 A"/>
    <property type="chains" value="T=2-89"/>
</dbReference>
<dbReference type="PDB" id="6WD3">
    <property type="method" value="EM"/>
    <property type="resolution" value="3.60 A"/>
    <property type="chains" value="T=2-89"/>
</dbReference>
<dbReference type="PDB" id="6WD4">
    <property type="method" value="EM"/>
    <property type="resolution" value="3.70 A"/>
    <property type="chains" value="T=2-89"/>
</dbReference>
<dbReference type="PDB" id="6WD5">
    <property type="method" value="EM"/>
    <property type="resolution" value="3.60 A"/>
    <property type="chains" value="T=2-89"/>
</dbReference>
<dbReference type="PDB" id="6WD6">
    <property type="method" value="EM"/>
    <property type="resolution" value="3.70 A"/>
    <property type="chains" value="T=2-89"/>
</dbReference>
<dbReference type="PDB" id="6WD7">
    <property type="method" value="EM"/>
    <property type="resolution" value="3.90 A"/>
    <property type="chains" value="T=2-89"/>
</dbReference>
<dbReference type="PDB" id="6WD8">
    <property type="method" value="EM"/>
    <property type="resolution" value="3.70 A"/>
    <property type="chains" value="T=2-89"/>
</dbReference>
<dbReference type="PDB" id="6WD9">
    <property type="method" value="EM"/>
    <property type="resolution" value="3.70 A"/>
    <property type="chains" value="T=2-89"/>
</dbReference>
<dbReference type="PDB" id="6WDA">
    <property type="method" value="EM"/>
    <property type="resolution" value="3.80 A"/>
    <property type="chains" value="T=2-89"/>
</dbReference>
<dbReference type="PDB" id="6WDB">
    <property type="method" value="EM"/>
    <property type="resolution" value="4.00 A"/>
    <property type="chains" value="T=2-89"/>
</dbReference>
<dbReference type="PDB" id="6WDC">
    <property type="method" value="EM"/>
    <property type="resolution" value="4.20 A"/>
    <property type="chains" value="T=2-89"/>
</dbReference>
<dbReference type="PDB" id="6WDD">
    <property type="method" value="EM"/>
    <property type="resolution" value="3.20 A"/>
    <property type="chains" value="T=2-89"/>
</dbReference>
<dbReference type="PDB" id="6WDE">
    <property type="method" value="EM"/>
    <property type="resolution" value="3.00 A"/>
    <property type="chains" value="T=2-89"/>
</dbReference>
<dbReference type="PDB" id="6WDF">
    <property type="method" value="EM"/>
    <property type="resolution" value="3.30 A"/>
    <property type="chains" value="T=2-89"/>
</dbReference>
<dbReference type="PDB" id="6WDG">
    <property type="method" value="EM"/>
    <property type="resolution" value="3.30 A"/>
    <property type="chains" value="T=2-89"/>
</dbReference>
<dbReference type="PDB" id="6WDH">
    <property type="method" value="EM"/>
    <property type="resolution" value="4.30 A"/>
    <property type="chains" value="T=2-89"/>
</dbReference>
<dbReference type="PDB" id="6WDI">
    <property type="method" value="EM"/>
    <property type="resolution" value="4.00 A"/>
    <property type="chains" value="T=2-89"/>
</dbReference>
<dbReference type="PDB" id="6WDJ">
    <property type="method" value="EM"/>
    <property type="resolution" value="3.70 A"/>
    <property type="chains" value="T=2-89"/>
</dbReference>
<dbReference type="PDB" id="6WDK">
    <property type="method" value="EM"/>
    <property type="resolution" value="3.60 A"/>
    <property type="chains" value="T=2-89"/>
</dbReference>
<dbReference type="PDB" id="6WDL">
    <property type="method" value="EM"/>
    <property type="resolution" value="3.70 A"/>
    <property type="chains" value="T=2-89"/>
</dbReference>
<dbReference type="PDB" id="6WDM">
    <property type="method" value="EM"/>
    <property type="resolution" value="3.60 A"/>
    <property type="chains" value="T=2-89"/>
</dbReference>
<dbReference type="PDB" id="6WNV">
    <property type="method" value="EM"/>
    <property type="resolution" value="3.50 A"/>
    <property type="chains" value="T=2-89"/>
</dbReference>
<dbReference type="PDB" id="6WNW">
    <property type="method" value="EM"/>
    <property type="resolution" value="3.20 A"/>
    <property type="chains" value="T=2-89"/>
</dbReference>
<dbReference type="PDB" id="6X6T">
    <property type="method" value="EM"/>
    <property type="resolution" value="3.20 A"/>
    <property type="chains" value="T=1-89"/>
</dbReference>
<dbReference type="PDB" id="6X7F">
    <property type="method" value="EM"/>
    <property type="resolution" value="3.50 A"/>
    <property type="chains" value="T=1-89"/>
</dbReference>
<dbReference type="PDB" id="6X7K">
    <property type="method" value="EM"/>
    <property type="resolution" value="3.10 A"/>
    <property type="chains" value="T=1-89"/>
</dbReference>
<dbReference type="PDB" id="6X9Q">
    <property type="method" value="EM"/>
    <property type="resolution" value="4.80 A"/>
    <property type="chains" value="T=1-89"/>
</dbReference>
<dbReference type="PDB" id="6XDQ">
    <property type="method" value="EM"/>
    <property type="resolution" value="3.70 A"/>
    <property type="chains" value="T=1-89"/>
</dbReference>
<dbReference type="PDB" id="6XDR">
    <property type="method" value="EM"/>
    <property type="resolution" value="4.70 A"/>
    <property type="chains" value="T=1-89"/>
</dbReference>
<dbReference type="PDB" id="6XE0">
    <property type="method" value="EM"/>
    <property type="resolution" value="6.80 A"/>
    <property type="chains" value="O=2-89"/>
</dbReference>
<dbReference type="PDB" id="6XGF">
    <property type="method" value="EM"/>
    <property type="resolution" value="5.00 A"/>
    <property type="chains" value="T=1-89"/>
</dbReference>
<dbReference type="PDB" id="6XII">
    <property type="method" value="EM"/>
    <property type="resolution" value="7.00 A"/>
    <property type="chains" value="T=1-89"/>
</dbReference>
<dbReference type="PDB" id="6XIJ">
    <property type="method" value="EM"/>
    <property type="resolution" value="8.00 A"/>
    <property type="chains" value="T=1-89"/>
</dbReference>
<dbReference type="PDB" id="6XZA">
    <property type="method" value="EM"/>
    <property type="resolution" value="2.66 A"/>
    <property type="chains" value="O1=2-89"/>
</dbReference>
<dbReference type="PDB" id="6XZB">
    <property type="method" value="EM"/>
    <property type="resolution" value="2.54 A"/>
    <property type="chains" value="O1=2-89"/>
</dbReference>
<dbReference type="PDB" id="6Y69">
    <property type="method" value="EM"/>
    <property type="resolution" value="2.86 A"/>
    <property type="chains" value="o=2-89"/>
</dbReference>
<dbReference type="PDB" id="6ZTJ">
    <property type="method" value="EM"/>
    <property type="resolution" value="3.40 A"/>
    <property type="chains" value="AO=1-89"/>
</dbReference>
<dbReference type="PDB" id="6ZTL">
    <property type="method" value="EM"/>
    <property type="resolution" value="3.50 A"/>
    <property type="chains" value="AO=1-89"/>
</dbReference>
<dbReference type="PDB" id="6ZTM">
    <property type="method" value="EM"/>
    <property type="resolution" value="3.30 A"/>
    <property type="chains" value="AO=1-89"/>
</dbReference>
<dbReference type="PDB" id="6ZTN">
    <property type="method" value="EM"/>
    <property type="resolution" value="3.90 A"/>
    <property type="chains" value="AO=1-89"/>
</dbReference>
<dbReference type="PDB" id="6ZTO">
    <property type="method" value="EM"/>
    <property type="resolution" value="3.00 A"/>
    <property type="chains" value="AO=1-89"/>
</dbReference>
<dbReference type="PDB" id="6ZTP">
    <property type="method" value="EM"/>
    <property type="resolution" value="3.00 A"/>
    <property type="chains" value="AO=1-89"/>
</dbReference>
<dbReference type="PDB" id="6ZU1">
    <property type="method" value="EM"/>
    <property type="resolution" value="3.00 A"/>
    <property type="chains" value="AO=1-89"/>
</dbReference>
<dbReference type="PDB" id="7ABZ">
    <property type="method" value="EM"/>
    <property type="resolution" value="3.21 A"/>
    <property type="chains" value="t=2-89"/>
</dbReference>
<dbReference type="PDB" id="7AC7">
    <property type="method" value="EM"/>
    <property type="resolution" value="3.08 A"/>
    <property type="chains" value="t=3-89"/>
</dbReference>
<dbReference type="PDB" id="7ACJ">
    <property type="method" value="EM"/>
    <property type="resolution" value="3.20 A"/>
    <property type="chains" value="t=2-89"/>
</dbReference>
<dbReference type="PDB" id="7ACR">
    <property type="method" value="EM"/>
    <property type="resolution" value="3.44 A"/>
    <property type="chains" value="t=2-89"/>
</dbReference>
<dbReference type="PDB" id="7AFI">
    <property type="method" value="EM"/>
    <property type="resolution" value="3.53 A"/>
    <property type="chains" value="O=1-89"/>
</dbReference>
<dbReference type="PDB" id="7AFL">
    <property type="method" value="EM"/>
    <property type="resolution" value="4.20 A"/>
    <property type="chains" value="O=1-89"/>
</dbReference>
<dbReference type="PDB" id="7AFO">
    <property type="method" value="EM"/>
    <property type="resolution" value="3.93 A"/>
    <property type="chains" value="O=1-89"/>
</dbReference>
<dbReference type="PDB" id="7B5K">
    <property type="method" value="EM"/>
    <property type="resolution" value="2.90 A"/>
    <property type="chains" value="o=2-89"/>
</dbReference>
<dbReference type="PDB" id="7BOD">
    <property type="method" value="EM"/>
    <property type="resolution" value="2.88 A"/>
    <property type="chains" value="O=1-89"/>
</dbReference>
<dbReference type="PDB" id="7BOE">
    <property type="method" value="EM"/>
    <property type="resolution" value="2.90 A"/>
    <property type="chains" value="O=1-89"/>
</dbReference>
<dbReference type="PDB" id="7BOF">
    <property type="method" value="EM"/>
    <property type="resolution" value="2.92 A"/>
    <property type="chains" value="O=1-89"/>
</dbReference>
<dbReference type="PDB" id="7BOG">
    <property type="method" value="EM"/>
    <property type="resolution" value="2.75 A"/>
    <property type="chains" value="O=1-89"/>
</dbReference>
<dbReference type="PDB" id="7BOH">
    <property type="method" value="EM"/>
    <property type="resolution" value="2.82 A"/>
    <property type="chains" value="O=1-89"/>
</dbReference>
<dbReference type="PDB" id="7BOI">
    <property type="method" value="EM"/>
    <property type="resolution" value="2.98 A"/>
    <property type="chains" value="O=1-89"/>
</dbReference>
<dbReference type="PDB" id="7D6Z">
    <property type="method" value="EM"/>
    <property type="resolution" value="3.40 A"/>
    <property type="chains" value="v=1-89"/>
</dbReference>
<dbReference type="PDB" id="7D80">
    <property type="method" value="EM"/>
    <property type="resolution" value="4.10 A"/>
    <property type="chains" value="P=1-89"/>
</dbReference>
<dbReference type="PDB" id="7JSS">
    <property type="method" value="EM"/>
    <property type="resolution" value="3.70 A"/>
    <property type="chains" value="T=2-89"/>
</dbReference>
<dbReference type="PDB" id="7JSW">
    <property type="method" value="EM"/>
    <property type="resolution" value="3.80 A"/>
    <property type="chains" value="T=2-89"/>
</dbReference>
<dbReference type="PDB" id="7JSZ">
    <property type="method" value="EM"/>
    <property type="resolution" value="3.70 A"/>
    <property type="chains" value="T=2-89"/>
</dbReference>
<dbReference type="PDB" id="7JT1">
    <property type="method" value="EM"/>
    <property type="resolution" value="3.30 A"/>
    <property type="chains" value="T=2-89"/>
</dbReference>
<dbReference type="PDB" id="7JT2">
    <property type="method" value="EM"/>
    <property type="resolution" value="3.50 A"/>
    <property type="chains" value="T=2-89"/>
</dbReference>
<dbReference type="PDB" id="7JT3">
    <property type="method" value="EM"/>
    <property type="resolution" value="3.70 A"/>
    <property type="chains" value="T=2-89"/>
</dbReference>
<dbReference type="PDB" id="7K00">
    <property type="method" value="EM"/>
    <property type="resolution" value="1.98 A"/>
    <property type="chains" value="O=1-89"/>
</dbReference>
<dbReference type="PDB" id="7K50">
    <property type="method" value="EM"/>
    <property type="resolution" value="3.40 A"/>
    <property type="chains" value="T=2-89"/>
</dbReference>
<dbReference type="PDB" id="7K51">
    <property type="method" value="EM"/>
    <property type="resolution" value="3.50 A"/>
    <property type="chains" value="T=2-89"/>
</dbReference>
<dbReference type="PDB" id="7K52">
    <property type="method" value="EM"/>
    <property type="resolution" value="3.40 A"/>
    <property type="chains" value="T=2-89"/>
</dbReference>
<dbReference type="PDB" id="7K53">
    <property type="method" value="EM"/>
    <property type="resolution" value="3.20 A"/>
    <property type="chains" value="T=2-89"/>
</dbReference>
<dbReference type="PDB" id="7K54">
    <property type="method" value="EM"/>
    <property type="resolution" value="3.20 A"/>
    <property type="chains" value="T=2-89"/>
</dbReference>
<dbReference type="PDB" id="7K55">
    <property type="method" value="EM"/>
    <property type="resolution" value="3.30 A"/>
    <property type="chains" value="T=2-89"/>
</dbReference>
<dbReference type="PDB" id="7LV0">
    <property type="method" value="EM"/>
    <property type="resolution" value="3.20 A"/>
    <property type="chains" value="T=2-89"/>
</dbReference>
<dbReference type="PDB" id="7M5D">
    <property type="method" value="EM"/>
    <property type="resolution" value="2.80 A"/>
    <property type="chains" value="t=2-89"/>
</dbReference>
<dbReference type="PDB" id="7N1P">
    <property type="method" value="EM"/>
    <property type="resolution" value="2.33 A"/>
    <property type="chains" value="SO=1-89"/>
</dbReference>
<dbReference type="PDB" id="7N2C">
    <property type="method" value="EM"/>
    <property type="resolution" value="2.72 A"/>
    <property type="chains" value="SO=1-89"/>
</dbReference>
<dbReference type="PDB" id="7N2U">
    <property type="method" value="EM"/>
    <property type="resolution" value="2.53 A"/>
    <property type="chains" value="SO=1-89"/>
</dbReference>
<dbReference type="PDB" id="7N2V">
    <property type="method" value="EM"/>
    <property type="resolution" value="2.54 A"/>
    <property type="chains" value="SO=1-89"/>
</dbReference>
<dbReference type="PDB" id="7N30">
    <property type="method" value="EM"/>
    <property type="resolution" value="2.66 A"/>
    <property type="chains" value="SO=1-89"/>
</dbReference>
<dbReference type="PDB" id="7N31">
    <property type="method" value="EM"/>
    <property type="resolution" value="2.69 A"/>
    <property type="chains" value="SO=1-89"/>
</dbReference>
<dbReference type="PDB" id="7NAR">
    <property type="method" value="EM"/>
    <property type="resolution" value="3.00 A"/>
    <property type="chains" value="O=1-89"/>
</dbReference>
<dbReference type="PDB" id="7NAS">
    <property type="method" value="EM"/>
    <property type="resolution" value="3.31 A"/>
    <property type="chains" value="O=1-89"/>
</dbReference>
<dbReference type="PDB" id="7NAT">
    <property type="method" value="EM"/>
    <property type="resolution" value="3.59 A"/>
    <property type="chains" value="O=1-89"/>
</dbReference>
<dbReference type="PDB" id="7NAU">
    <property type="method" value="EM"/>
    <property type="resolution" value="3.78 A"/>
    <property type="chains" value="O=1-89"/>
</dbReference>
<dbReference type="PDB" id="7NAV">
    <property type="method" value="EM"/>
    <property type="resolution" value="4.80 A"/>
    <property type="chains" value="O=1-89"/>
</dbReference>
<dbReference type="PDB" id="7NAX">
    <property type="method" value="EM"/>
    <property type="resolution" value="2.96 A"/>
    <property type="chains" value="O=1-89"/>
</dbReference>
<dbReference type="PDB" id="7NBU">
    <property type="method" value="EM"/>
    <property type="resolution" value="3.11 A"/>
    <property type="chains" value="O=2-89"/>
</dbReference>
<dbReference type="PDB" id="7O19">
    <property type="method" value="EM"/>
    <property type="resolution" value="2.90 A"/>
    <property type="chains" value="AO=1-89"/>
</dbReference>
<dbReference type="PDB" id="7O1A">
    <property type="method" value="EM"/>
    <property type="resolution" value="2.40 A"/>
    <property type="chains" value="AO=1-89"/>
</dbReference>
<dbReference type="PDB" id="7O1C">
    <property type="method" value="EM"/>
    <property type="resolution" value="2.60 A"/>
    <property type="chains" value="AO=1-89"/>
</dbReference>
<dbReference type="PDB" id="7O5H">
    <property type="method" value="EM"/>
    <property type="resolution" value="3.10 A"/>
    <property type="chains" value="O=2-89"/>
</dbReference>
<dbReference type="PDB" id="7OE0">
    <property type="method" value="EM"/>
    <property type="resolution" value="2.69 A"/>
    <property type="chains" value="O=1-89"/>
</dbReference>
<dbReference type="PDB" id="7OE1">
    <property type="method" value="EM"/>
    <property type="resolution" value="3.05 A"/>
    <property type="chains" value="O=1-89"/>
</dbReference>
<dbReference type="PDB" id="7OI0">
    <property type="method" value="EM"/>
    <property type="resolution" value="2.76 A"/>
    <property type="chains" value="O=1-89"/>
</dbReference>
<dbReference type="PDB" id="7OIZ">
    <property type="method" value="EM"/>
    <property type="resolution" value="2.90 A"/>
    <property type="chains" value="O=1-89"/>
</dbReference>
<dbReference type="PDB" id="7OJ0">
    <property type="method" value="EM"/>
    <property type="resolution" value="3.50 A"/>
    <property type="chains" value="O=1-89"/>
</dbReference>
<dbReference type="PDB" id="7P3K">
    <property type="method" value="EM"/>
    <property type="resolution" value="2.90 A"/>
    <property type="chains" value="O=1-89"/>
</dbReference>
<dbReference type="PDB" id="7PJV">
    <property type="method" value="EM"/>
    <property type="resolution" value="3.10 A"/>
    <property type="chains" value="o=1-89"/>
</dbReference>
<dbReference type="PDB" id="7PJY">
    <property type="method" value="EM"/>
    <property type="resolution" value="3.10 A"/>
    <property type="chains" value="o=1-89"/>
</dbReference>
<dbReference type="PDB" id="7QG8">
    <property type="method" value="EM"/>
    <property type="resolution" value="3.97 A"/>
    <property type="chains" value="H=1-89"/>
</dbReference>
<dbReference type="PDB" id="7QGH">
    <property type="method" value="EM"/>
    <property type="resolution" value="4.48 A"/>
    <property type="chains" value="F=1-89"/>
</dbReference>
<dbReference type="PDB" id="7QGN">
    <property type="method" value="EM"/>
    <property type="resolution" value="3.37 A"/>
    <property type="chains" value="H=1-89"/>
</dbReference>
<dbReference type="PDB" id="7QGR">
    <property type="method" value="EM"/>
    <property type="resolution" value="5.70 A"/>
    <property type="chains" value="F=1-89"/>
</dbReference>
<dbReference type="PDB" id="7S1G">
    <property type="method" value="EM"/>
    <property type="resolution" value="2.48 A"/>
    <property type="chains" value="w=1-89"/>
</dbReference>
<dbReference type="PDB" id="7S1H">
    <property type="method" value="EM"/>
    <property type="resolution" value="2.35 A"/>
    <property type="chains" value="w=1-89"/>
</dbReference>
<dbReference type="PDB" id="7S1I">
    <property type="method" value="EM"/>
    <property type="resolution" value="2.48 A"/>
    <property type="chains" value="w=1-89"/>
</dbReference>
<dbReference type="PDB" id="7S1J">
    <property type="method" value="EM"/>
    <property type="resolution" value="2.47 A"/>
    <property type="chains" value="w=1-89"/>
</dbReference>
<dbReference type="PDB" id="7S1K">
    <property type="method" value="EM"/>
    <property type="resolution" value="2.42 A"/>
    <property type="chains" value="w=1-89"/>
</dbReference>
<dbReference type="PDB" id="7SA4">
    <property type="method" value="EM"/>
    <property type="resolution" value="2.55 A"/>
    <property type="chains" value="t=1-89"/>
</dbReference>
<dbReference type="PDB" id="7SS9">
    <property type="method" value="EM"/>
    <property type="resolution" value="3.90 A"/>
    <property type="chains" value="T=2-89"/>
</dbReference>
<dbReference type="PDB" id="7SSD">
    <property type="method" value="EM"/>
    <property type="resolution" value="3.30 A"/>
    <property type="chains" value="T=2-89"/>
</dbReference>
<dbReference type="PDB" id="7SSL">
    <property type="method" value="EM"/>
    <property type="resolution" value="3.80 A"/>
    <property type="chains" value="T=2-89"/>
</dbReference>
<dbReference type="PDB" id="7SSN">
    <property type="method" value="EM"/>
    <property type="resolution" value="3.20 A"/>
    <property type="chains" value="T=2-89"/>
</dbReference>
<dbReference type="PDB" id="7SSO">
    <property type="method" value="EM"/>
    <property type="resolution" value="3.20 A"/>
    <property type="chains" value="T=2-89"/>
</dbReference>
<dbReference type="PDB" id="7SSW">
    <property type="method" value="EM"/>
    <property type="resolution" value="3.80 A"/>
    <property type="chains" value="T=2-89"/>
</dbReference>
<dbReference type="PDB" id="7ST2">
    <property type="method" value="EM"/>
    <property type="resolution" value="2.90 A"/>
    <property type="chains" value="T=2-89"/>
</dbReference>
<dbReference type="PDB" id="7ST6">
    <property type="method" value="EM"/>
    <property type="resolution" value="3.00 A"/>
    <property type="chains" value="T=2-89"/>
</dbReference>
<dbReference type="PDB" id="7ST7">
    <property type="method" value="EM"/>
    <property type="resolution" value="3.20 A"/>
    <property type="chains" value="T=2-89"/>
</dbReference>
<dbReference type="PDB" id="7TOS">
    <property type="method" value="EM"/>
    <property type="resolution" value="2.90 A"/>
    <property type="chains" value="S15=2-89"/>
</dbReference>
<dbReference type="PDB" id="7UG7">
    <property type="method" value="EM"/>
    <property type="resolution" value="2.58 A"/>
    <property type="chains" value="SO=1-89"/>
</dbReference>
<dbReference type="PDB" id="7UPH">
    <property type="method" value="EM"/>
    <property type="resolution" value="4.18 A"/>
    <property type="chains" value="B=2-89"/>
</dbReference>
<dbReference type="PDB" id="7Y7C">
    <property type="method" value="EM"/>
    <property type="resolution" value="2.51 A"/>
    <property type="chains" value="O=1-89"/>
</dbReference>
<dbReference type="PDB" id="7Y7D">
    <property type="method" value="EM"/>
    <property type="resolution" value="2.58 A"/>
    <property type="chains" value="O=1-89"/>
</dbReference>
<dbReference type="PDB" id="7Y7E">
    <property type="method" value="EM"/>
    <property type="resolution" value="2.41 A"/>
    <property type="chains" value="O=1-89"/>
</dbReference>
<dbReference type="PDB" id="7Y7F">
    <property type="method" value="EM"/>
    <property type="resolution" value="2.43 A"/>
    <property type="chains" value="O=1-89"/>
</dbReference>
<dbReference type="PDB" id="7Y7G">
    <property type="method" value="EM"/>
    <property type="resolution" value="2.34 A"/>
    <property type="chains" value="O=1-89"/>
</dbReference>
<dbReference type="PDB" id="7Y7H">
    <property type="method" value="EM"/>
    <property type="resolution" value="2.51 A"/>
    <property type="chains" value="O=1-89"/>
</dbReference>
<dbReference type="PDB" id="7ZTA">
    <property type="method" value="EM"/>
    <property type="resolution" value="2.70 A"/>
    <property type="chains" value="S151=2-89"/>
</dbReference>
<dbReference type="PDB" id="8A3L">
    <property type="method" value="EM"/>
    <property type="resolution" value="3.42 A"/>
    <property type="chains" value="O=1-89"/>
</dbReference>
<dbReference type="PDB" id="8AKN">
    <property type="method" value="EM"/>
    <property type="resolution" value="2.30 A"/>
    <property type="chains" value="P=1-89"/>
</dbReference>
<dbReference type="PDB" id="8AM9">
    <property type="method" value="EM"/>
    <property type="resolution" value="2.80 A"/>
    <property type="chains" value="P=1-89"/>
</dbReference>
<dbReference type="PDB" id="8AYE">
    <property type="method" value="EM"/>
    <property type="resolution" value="1.96 A"/>
    <property type="chains" value="O=1-89"/>
</dbReference>
<dbReference type="PDB" id="8B0X">
    <property type="method" value="EM"/>
    <property type="resolution" value="1.55 A"/>
    <property type="chains" value="O=1-89"/>
</dbReference>
<dbReference type="PDB" id="8B7Y">
    <property type="method" value="EM"/>
    <property type="resolution" value="3.00 A"/>
    <property type="chains" value="t=1-89"/>
</dbReference>
<dbReference type="PDB" id="8BD5">
    <property type="method" value="EM"/>
    <property type="resolution" value="3.30 A"/>
    <property type="chains" value="X=1-89"/>
</dbReference>
<dbReference type="PDB" id="8BF7">
    <property type="method" value="EM"/>
    <property type="resolution" value="2.33 A"/>
    <property type="chains" value="s=1-89"/>
</dbReference>
<dbReference type="PDB" id="8BGE">
    <property type="method" value="EM"/>
    <property type="resolution" value="2.11 A"/>
    <property type="chains" value="s=1-89"/>
</dbReference>
<dbReference type="PDB" id="8BGH">
    <property type="method" value="EM"/>
    <property type="resolution" value="2.88 A"/>
    <property type="chains" value="s=1-89"/>
</dbReference>
<dbReference type="PDB" id="8BH4">
    <property type="method" value="EM"/>
    <property type="resolution" value="2.62 A"/>
    <property type="chains" value="s=1-89"/>
</dbReference>
<dbReference type="PDB" id="8BHJ">
    <property type="method" value="EM"/>
    <property type="resolution" value="2.81 A"/>
    <property type="chains" value="s=1-89"/>
</dbReference>
<dbReference type="PDB" id="8BHL">
    <property type="method" value="EM"/>
    <property type="resolution" value="2.21 A"/>
    <property type="chains" value="s=1-89"/>
</dbReference>
<dbReference type="PDB" id="8BHN">
    <property type="method" value="EM"/>
    <property type="resolution" value="2.85 A"/>
    <property type="chains" value="s=1-89"/>
</dbReference>
<dbReference type="PDB" id="8BHP">
    <property type="method" value="EM"/>
    <property type="resolution" value="2.37 A"/>
    <property type="chains" value="s=1-89"/>
</dbReference>
<dbReference type="PDB" id="8BIL">
    <property type="method" value="EM"/>
    <property type="resolution" value="2.04 A"/>
    <property type="chains" value="s=1-89"/>
</dbReference>
<dbReference type="PDB" id="8BIM">
    <property type="method" value="EM"/>
    <property type="resolution" value="2.04 A"/>
    <property type="chains" value="s=1-89"/>
</dbReference>
<dbReference type="PDB" id="8CAI">
    <property type="method" value="EM"/>
    <property type="resolution" value="2.08 A"/>
    <property type="chains" value="O=1-89"/>
</dbReference>
<dbReference type="PDB" id="8CEP">
    <property type="method" value="EM"/>
    <property type="resolution" value="2.04 A"/>
    <property type="chains" value="O=1-89"/>
</dbReference>
<dbReference type="PDB" id="8CGJ">
    <property type="method" value="EM"/>
    <property type="resolution" value="1.79 A"/>
    <property type="chains" value="O=1-89"/>
</dbReference>
<dbReference type="PDB" id="8CGR">
    <property type="method" value="EM"/>
    <property type="resolution" value="2.12 A"/>
    <property type="chains" value="O=1-89"/>
</dbReference>
<dbReference type="PDB" id="8CGU">
    <property type="method" value="EM"/>
    <property type="resolution" value="1.89 A"/>
    <property type="chains" value="O=1-89"/>
</dbReference>
<dbReference type="PDB" id="8EA3">
    <property type="method" value="EM"/>
    <property type="resolution" value="3.70 A"/>
    <property type="chains" value="S=1-89"/>
</dbReference>
<dbReference type="PDB" id="8EA4">
    <property type="method" value="EM"/>
    <property type="resolution" value="3.00 A"/>
    <property type="chains" value="S=1-89"/>
</dbReference>
<dbReference type="PDB" id="8EIU">
    <property type="method" value="EM"/>
    <property type="resolution" value="2.24 A"/>
    <property type="chains" value="O=1-89"/>
</dbReference>
<dbReference type="PDB" id="8EKC">
    <property type="method" value="EM"/>
    <property type="resolution" value="2.70 A"/>
    <property type="chains" value="o=1-89"/>
</dbReference>
<dbReference type="PDB" id="8EMM">
    <property type="method" value="EM"/>
    <property type="resolution" value="2.10 A"/>
    <property type="chains" value="O=1-89"/>
</dbReference>
<dbReference type="PDB" id="8EYQ">
    <property type="method" value="EM"/>
    <property type="resolution" value="3.30 A"/>
    <property type="chains" value="O=1-89"/>
</dbReference>
<dbReference type="PDB" id="8EYT">
    <property type="method" value="EM"/>
    <property type="resolution" value="2.80 A"/>
    <property type="chains" value="U=1-89"/>
</dbReference>
<dbReference type="PDB" id="8FIZ">
    <property type="method" value="EM"/>
    <property type="resolution" value="3.80 A"/>
    <property type="chains" value="AR=1-89"/>
</dbReference>
<dbReference type="PDB" id="8FTO">
    <property type="method" value="EM"/>
    <property type="resolution" value="1.85 A"/>
    <property type="chains" value="O=1-89"/>
</dbReference>
<dbReference type="PDB" id="8FZD">
    <property type="method" value="EM"/>
    <property type="resolution" value="3.10 A"/>
    <property type="chains" value="o=1-89"/>
</dbReference>
<dbReference type="PDB" id="8FZE">
    <property type="method" value="EM"/>
    <property type="resolution" value="3.00 A"/>
    <property type="chains" value="o=1-89"/>
</dbReference>
<dbReference type="PDB" id="8FZF">
    <property type="method" value="EM"/>
    <property type="resolution" value="3.20 A"/>
    <property type="chains" value="o=1-89"/>
</dbReference>
<dbReference type="PDB" id="8FZG">
    <property type="method" value="EM"/>
    <property type="resolution" value="3.10 A"/>
    <property type="chains" value="o=1-89"/>
</dbReference>
<dbReference type="PDB" id="8FZH">
    <property type="method" value="EM"/>
    <property type="resolution" value="2.90 A"/>
    <property type="chains" value="o=1-89"/>
</dbReference>
<dbReference type="PDB" id="8FZI">
    <property type="method" value="EM"/>
    <property type="resolution" value="3.10 A"/>
    <property type="chains" value="o=1-89"/>
</dbReference>
<dbReference type="PDB" id="8FZJ">
    <property type="method" value="EM"/>
    <property type="resolution" value="3.00 A"/>
    <property type="chains" value="o=1-89"/>
</dbReference>
<dbReference type="PDB" id="8G2U">
    <property type="method" value="EM"/>
    <property type="resolution" value="3.00 A"/>
    <property type="chains" value="n=2-89"/>
</dbReference>
<dbReference type="PDB" id="8G31">
    <property type="method" value="EM"/>
    <property type="resolution" value="3.20 A"/>
    <property type="chains" value="n=2-89"/>
</dbReference>
<dbReference type="PDB" id="8G34">
    <property type="method" value="EM"/>
    <property type="resolution" value="3.20 A"/>
    <property type="chains" value="n=2-89"/>
</dbReference>
<dbReference type="PDB" id="8G38">
    <property type="method" value="EM"/>
    <property type="resolution" value="3.20 A"/>
    <property type="chains" value="n=2-89"/>
</dbReference>
<dbReference type="PDB" id="8G6W">
    <property type="method" value="EM"/>
    <property type="resolution" value="2.02 A"/>
    <property type="chains" value="O=1-89"/>
</dbReference>
<dbReference type="PDB" id="8G7P">
    <property type="method" value="EM"/>
    <property type="resolution" value="2.90 A"/>
    <property type="chains" value="o=1-89"/>
</dbReference>
<dbReference type="PDB" id="8G7Q">
    <property type="method" value="EM"/>
    <property type="resolution" value="3.10 A"/>
    <property type="chains" value="o=1-89"/>
</dbReference>
<dbReference type="PDB" id="8G7R">
    <property type="method" value="EM"/>
    <property type="resolution" value="2.80 A"/>
    <property type="chains" value="o=1-89"/>
</dbReference>
<dbReference type="PDB" id="8G7S">
    <property type="method" value="EM"/>
    <property type="resolution" value="3.10 A"/>
    <property type="chains" value="o=1-89"/>
</dbReference>
<dbReference type="PDB" id="8GHU">
    <property type="method" value="EM"/>
    <property type="resolution" value="3.00 A"/>
    <property type="chains" value="o=2-89"/>
</dbReference>
<dbReference type="PDB" id="8HSP">
    <property type="method" value="EM"/>
    <property type="resolution" value="2.32 A"/>
    <property type="chains" value="O=1-89"/>
</dbReference>
<dbReference type="PDB" id="8HTZ">
    <property type="method" value="EM"/>
    <property type="resolution" value="2.40 A"/>
    <property type="chains" value="O=1-89"/>
</dbReference>
<dbReference type="PDB" id="8HU1">
    <property type="method" value="EM"/>
    <property type="resolution" value="2.69 A"/>
    <property type="chains" value="O=1-89"/>
</dbReference>
<dbReference type="PDB" id="8IFB">
    <property type="method" value="EM"/>
    <property type="resolution" value="2.43 A"/>
    <property type="chains" value="O=1-89"/>
</dbReference>
<dbReference type="PDB" id="8IFC">
    <property type="method" value="EM"/>
    <property type="resolution" value="2.90 A"/>
    <property type="chains" value="O=1-89"/>
</dbReference>
<dbReference type="PDB" id="8JSG">
    <property type="method" value="EM"/>
    <property type="resolution" value="4.60 A"/>
    <property type="chains" value="u=2-89"/>
</dbReference>
<dbReference type="PDB" id="8JSH">
    <property type="method" value="EM"/>
    <property type="resolution" value="4.40 A"/>
    <property type="chains" value="u=1-89"/>
</dbReference>
<dbReference type="PDB" id="8K3O">
    <property type="method" value="EM"/>
    <property type="resolution" value="3.88 A"/>
    <property type="chains" value="O=1-89"/>
</dbReference>
<dbReference type="PDB" id="8K4E">
    <property type="method" value="EM"/>
    <property type="resolution" value="3.40 A"/>
    <property type="chains" value="O=1-89"/>
</dbReference>
<dbReference type="PDB" id="8P16">
    <property type="method" value="EM"/>
    <property type="resolution" value="2.77 A"/>
    <property type="chains" value="t=1-89"/>
</dbReference>
<dbReference type="PDB" id="8P17">
    <property type="method" value="EM"/>
    <property type="resolution" value="2.78 A"/>
    <property type="chains" value="t=1-89"/>
</dbReference>
<dbReference type="PDB" id="8P18">
    <property type="method" value="EM"/>
    <property type="resolution" value="2.77 A"/>
    <property type="chains" value="t=1-89"/>
</dbReference>
<dbReference type="PDB" id="8PEG">
    <property type="method" value="EM"/>
    <property type="resolution" value="3.30 A"/>
    <property type="chains" value="O=1-89"/>
</dbReference>
<dbReference type="PDB" id="8PHJ">
    <property type="method" value="EM"/>
    <property type="resolution" value="3.67 A"/>
    <property type="chains" value="O=1-89"/>
</dbReference>
<dbReference type="PDB" id="8PKL">
    <property type="method" value="EM"/>
    <property type="resolution" value="3.09 A"/>
    <property type="chains" value="O=1-89"/>
</dbReference>
<dbReference type="PDB" id="8PVA">
    <property type="method" value="EM"/>
    <property type="resolution" value="4.50 A"/>
    <property type="chains" value="O=1-89"/>
</dbReference>
<dbReference type="PDB" id="8Q4F">
    <property type="method" value="EM"/>
    <property type="resolution" value="3.10 A"/>
    <property type="chains" value="O=1-89"/>
</dbReference>
<dbReference type="PDB" id="8QBT">
    <property type="method" value="EM"/>
    <property type="resolution" value="2.20 A"/>
    <property type="chains" value="w=1-89"/>
</dbReference>
<dbReference type="PDB" id="8QK7">
    <property type="method" value="EM"/>
    <property type="resolution" value="2.77 A"/>
    <property type="chains" value="t=1-89"/>
</dbReference>
<dbReference type="PDB" id="8QOA">
    <property type="method" value="EM"/>
    <property type="resolution" value="2.00 A"/>
    <property type="chains" value="O=1-89"/>
</dbReference>
<dbReference type="PDB" id="8R3V">
    <property type="method" value="EM"/>
    <property type="resolution" value="3.28 A"/>
    <property type="chains" value="O1/O2=1-89"/>
</dbReference>
<dbReference type="PDB" id="8R6C">
    <property type="method" value="EM"/>
    <property type="resolution" value="2.20 A"/>
    <property type="chains" value="O=1-89"/>
</dbReference>
<dbReference type="PDB" id="8R8M">
    <property type="method" value="EM"/>
    <property type="resolution" value="2.40 A"/>
    <property type="chains" value="O=1-89"/>
</dbReference>
<dbReference type="PDB" id="8RCL">
    <property type="method" value="EM"/>
    <property type="resolution" value="3.49 A"/>
    <property type="chains" value="O1/O2=1-89"/>
</dbReference>
<dbReference type="PDB" id="8RCM">
    <property type="method" value="EM"/>
    <property type="resolution" value="3.59 A"/>
    <property type="chains" value="O1/O2=1-89"/>
</dbReference>
<dbReference type="PDB" id="8RCS">
    <property type="method" value="EM"/>
    <property type="resolution" value="4.46 A"/>
    <property type="chains" value="O1/O2=1-89"/>
</dbReference>
<dbReference type="PDB" id="8RCT">
    <property type="method" value="EM"/>
    <property type="resolution" value="5.32 A"/>
    <property type="chains" value="O1/O2=1-89"/>
</dbReference>
<dbReference type="PDB" id="8SYL">
    <property type="method" value="EM"/>
    <property type="resolution" value="2.90 A"/>
    <property type="chains" value="o=1-89"/>
</dbReference>
<dbReference type="PDB" id="8T5D">
    <property type="method" value="EM"/>
    <property type="resolution" value="3.20 A"/>
    <property type="chains" value="n=2-89"/>
</dbReference>
<dbReference type="PDB" id="8T5H">
    <property type="method" value="EM"/>
    <property type="resolution" value="3.30 A"/>
    <property type="chains" value="n=2-89"/>
</dbReference>
<dbReference type="PDB" id="8UPO">
    <property type="method" value="EM"/>
    <property type="resolution" value="5.50 A"/>
    <property type="chains" value="T=1-89"/>
</dbReference>
<dbReference type="PDB" id="8UPR">
    <property type="method" value="EM"/>
    <property type="resolution" value="5.30 A"/>
    <property type="chains" value="T=1-89"/>
</dbReference>
<dbReference type="PDB" id="8UQL">
    <property type="method" value="EM"/>
    <property type="resolution" value="3.20 A"/>
    <property type="chains" value="T=1-89"/>
</dbReference>
<dbReference type="PDB" id="8UQM">
    <property type="method" value="EM"/>
    <property type="resolution" value="5.30 A"/>
    <property type="chains" value="T=1-89"/>
</dbReference>
<dbReference type="PDB" id="8UQP">
    <property type="method" value="EM"/>
    <property type="resolution" value="3.80 A"/>
    <property type="chains" value="T=1-89"/>
</dbReference>
<dbReference type="PDB" id="8UR0">
    <property type="method" value="EM"/>
    <property type="resolution" value="3.40 A"/>
    <property type="chains" value="T=1-89"/>
</dbReference>
<dbReference type="PDB" id="8URH">
    <property type="method" value="EM"/>
    <property type="resolution" value="5.70 A"/>
    <property type="chains" value="T=1-89"/>
</dbReference>
<dbReference type="PDB" id="8URI">
    <property type="method" value="EM"/>
    <property type="resolution" value="5.30 A"/>
    <property type="chains" value="T=1-89"/>
</dbReference>
<dbReference type="PDB" id="8URX">
    <property type="method" value="EM"/>
    <property type="resolution" value="6.60 A"/>
    <property type="chains" value="T=1-89"/>
</dbReference>
<dbReference type="PDB" id="8URY">
    <property type="method" value="EM"/>
    <property type="resolution" value="3.10 A"/>
    <property type="chains" value="T=1-89"/>
</dbReference>
<dbReference type="PDB" id="8VS9">
    <property type="method" value="EM"/>
    <property type="resolution" value="3.90 A"/>
    <property type="chains" value="S15=1-89"/>
</dbReference>
<dbReference type="PDB" id="8VSA">
    <property type="method" value="EM"/>
    <property type="resolution" value="3.70 A"/>
    <property type="chains" value="S15=1-89"/>
</dbReference>
<dbReference type="PDB" id="8YUO">
    <property type="method" value="EM"/>
    <property type="resolution" value="2.25 A"/>
    <property type="chains" value="O=1-89"/>
</dbReference>
<dbReference type="PDB" id="8YUP">
    <property type="method" value="EM"/>
    <property type="resolution" value="2.39 A"/>
    <property type="chains" value="O=1-89"/>
</dbReference>
<dbReference type="PDB" id="8YUQ">
    <property type="method" value="EM"/>
    <property type="resolution" value="2.41 A"/>
    <property type="chains" value="O=1-89"/>
</dbReference>
<dbReference type="PDB" id="8YUR">
    <property type="method" value="EM"/>
    <property type="resolution" value="2.47 A"/>
    <property type="chains" value="O=1-89"/>
</dbReference>
<dbReference type="PDB" id="8YUS">
    <property type="method" value="EM"/>
    <property type="resolution" value="2.43 A"/>
    <property type="chains" value="O=1-89"/>
</dbReference>
<dbReference type="PDB" id="9DUK">
    <property type="method" value="EM"/>
    <property type="resolution" value="2.56 A"/>
    <property type="chains" value="O=1-89"/>
</dbReference>
<dbReference type="PDB" id="9DUL">
    <property type="method" value="EM"/>
    <property type="resolution" value="2.56 A"/>
    <property type="chains" value="O=1-89"/>
</dbReference>
<dbReference type="PDB" id="9FBV">
    <property type="method" value="EM"/>
    <property type="resolution" value="2.40 A"/>
    <property type="chains" value="O=1-89"/>
</dbReference>
<dbReference type="PDB" id="9GFT">
    <property type="method" value="EM"/>
    <property type="resolution" value="3.10 A"/>
    <property type="chains" value="AN/H=1-89"/>
</dbReference>
<dbReference type="PDB" id="9GGR">
    <property type="method" value="EM"/>
    <property type="resolution" value="3.20 A"/>
    <property type="chains" value="AN/H=1-89"/>
</dbReference>
<dbReference type="PDB" id="9GUP">
    <property type="method" value="EM"/>
    <property type="resolution" value="2.80 A"/>
    <property type="chains" value="P=1-89"/>
</dbReference>
<dbReference type="PDB" id="9GUQ">
    <property type="method" value="EM"/>
    <property type="resolution" value="3.10 A"/>
    <property type="chains" value="P=1-89"/>
</dbReference>
<dbReference type="PDB" id="9GUS">
    <property type="method" value="EM"/>
    <property type="resolution" value="3.50 A"/>
    <property type="chains" value="P=1-89"/>
</dbReference>
<dbReference type="PDB" id="9GUT">
    <property type="method" value="EM"/>
    <property type="resolution" value="2.80 A"/>
    <property type="chains" value="P=1-89"/>
</dbReference>
<dbReference type="PDB" id="9GUU">
    <property type="method" value="EM"/>
    <property type="resolution" value="2.50 A"/>
    <property type="chains" value="P=1-89"/>
</dbReference>
<dbReference type="PDB" id="9GUV">
    <property type="method" value="EM"/>
    <property type="resolution" value="3.00 A"/>
    <property type="chains" value="P=1-89"/>
</dbReference>
<dbReference type="PDB" id="9GUW">
    <property type="method" value="EM"/>
    <property type="resolution" value="3.10 A"/>
    <property type="chains" value="P=1-89"/>
</dbReference>
<dbReference type="PDB" id="9GUX">
    <property type="method" value="EM"/>
    <property type="resolution" value="3.30 A"/>
    <property type="chains" value="P=1-89"/>
</dbReference>
<dbReference type="PDB" id="9MOR">
    <property type="method" value="EM"/>
    <property type="resolution" value="2.65 A"/>
    <property type="chains" value="t=1-89"/>
</dbReference>
<dbReference type="PDB" id="9MQ4">
    <property type="method" value="EM"/>
    <property type="resolution" value="2.78 A"/>
    <property type="chains" value="t=1-89"/>
</dbReference>
<dbReference type="PDBsum" id="1EG0"/>
<dbReference type="PDBsum" id="2VAZ"/>
<dbReference type="PDBsum" id="2YKR"/>
<dbReference type="PDBsum" id="3IY8"/>
<dbReference type="PDBsum" id="3J9Y"/>
<dbReference type="PDBsum" id="3J9Z"/>
<dbReference type="PDBsum" id="3JA1"/>
<dbReference type="PDBsum" id="3JBU"/>
<dbReference type="PDBsum" id="3JBV"/>
<dbReference type="PDBsum" id="3JCD"/>
<dbReference type="PDBsum" id="3JCE"/>
<dbReference type="PDBsum" id="3JCJ"/>
<dbReference type="PDBsum" id="3JCN"/>
<dbReference type="PDBsum" id="4A2I"/>
<dbReference type="PDBsum" id="4ADV"/>
<dbReference type="PDBsum" id="4U1U"/>
<dbReference type="PDBsum" id="4U1V"/>
<dbReference type="PDBsum" id="4U20"/>
<dbReference type="PDBsum" id="4U24"/>
<dbReference type="PDBsum" id="4U25"/>
<dbReference type="PDBsum" id="4U26"/>
<dbReference type="PDBsum" id="4U27"/>
<dbReference type="PDBsum" id="4V47"/>
<dbReference type="PDBsum" id="4V48"/>
<dbReference type="PDBsum" id="4V4H"/>
<dbReference type="PDBsum" id="4V4Q"/>
<dbReference type="PDBsum" id="4V4V"/>
<dbReference type="PDBsum" id="4V4W"/>
<dbReference type="PDBsum" id="4V50"/>
<dbReference type="PDBsum" id="4V52"/>
<dbReference type="PDBsum" id="4V53"/>
<dbReference type="PDBsum" id="4V54"/>
<dbReference type="PDBsum" id="4V55"/>
<dbReference type="PDBsum" id="4V56"/>
<dbReference type="PDBsum" id="4V57"/>
<dbReference type="PDBsum" id="4V5B"/>
<dbReference type="PDBsum" id="4V5H"/>
<dbReference type="PDBsum" id="4V5Y"/>
<dbReference type="PDBsum" id="4V64"/>
<dbReference type="PDBsum" id="4V65"/>
<dbReference type="PDBsum" id="4V66"/>
<dbReference type="PDBsum" id="4V69"/>
<dbReference type="PDBsum" id="4V6C"/>
<dbReference type="PDBsum" id="4V6D"/>
<dbReference type="PDBsum" id="4V6E"/>
<dbReference type="PDBsum" id="4V6K"/>
<dbReference type="PDBsum" id="4V6L"/>
<dbReference type="PDBsum" id="4V6M"/>
<dbReference type="PDBsum" id="4V6N"/>
<dbReference type="PDBsum" id="4V6O"/>
<dbReference type="PDBsum" id="4V6P"/>
<dbReference type="PDBsum" id="4V6Q"/>
<dbReference type="PDBsum" id="4V6R"/>
<dbReference type="PDBsum" id="4V6S"/>
<dbReference type="PDBsum" id="4V6T"/>
<dbReference type="PDBsum" id="4V6V"/>
<dbReference type="PDBsum" id="4V6Y"/>
<dbReference type="PDBsum" id="4V6Z"/>
<dbReference type="PDBsum" id="4V70"/>
<dbReference type="PDBsum" id="4V71"/>
<dbReference type="PDBsum" id="4V72"/>
<dbReference type="PDBsum" id="4V73"/>
<dbReference type="PDBsum" id="4V74"/>
<dbReference type="PDBsum" id="4V75"/>
<dbReference type="PDBsum" id="4V76"/>
<dbReference type="PDBsum" id="4V77"/>
<dbReference type="PDBsum" id="4V78"/>
<dbReference type="PDBsum" id="4V79"/>
<dbReference type="PDBsum" id="4V7A"/>
<dbReference type="PDBsum" id="4V7B"/>
<dbReference type="PDBsum" id="4V7C"/>
<dbReference type="PDBsum" id="4V7D"/>
<dbReference type="PDBsum" id="4V7I"/>
<dbReference type="PDBsum" id="4V7S"/>
<dbReference type="PDBsum" id="4V7T"/>
<dbReference type="PDBsum" id="4V7U"/>
<dbReference type="PDBsum" id="4V7V"/>
<dbReference type="PDBsum" id="4V85"/>
<dbReference type="PDBsum" id="4V89"/>
<dbReference type="PDBsum" id="4V9C"/>
<dbReference type="PDBsum" id="4V9D"/>
<dbReference type="PDBsum" id="4V9O"/>
<dbReference type="PDBsum" id="4V9P"/>
<dbReference type="PDBsum" id="4WF1"/>
<dbReference type="PDBsum" id="4WWW"/>
<dbReference type="PDBsum" id="4YBB"/>
<dbReference type="PDBsum" id="5AFI"/>
<dbReference type="PDBsum" id="5H5U"/>
<dbReference type="PDBsum" id="5IQR"/>
<dbReference type="PDBsum" id="5IT8"/>
<dbReference type="PDBsum" id="5J5B"/>
<dbReference type="PDBsum" id="5J7L"/>
<dbReference type="PDBsum" id="5J88"/>
<dbReference type="PDBsum" id="5J8A"/>
<dbReference type="PDBsum" id="5J91"/>
<dbReference type="PDBsum" id="5JC9"/>
<dbReference type="PDBsum" id="5JTE"/>
<dbReference type="PDBsum" id="5JU8"/>
<dbReference type="PDBsum" id="5KCR"/>
<dbReference type="PDBsum" id="5KCS"/>
<dbReference type="PDBsum" id="5KPS"/>
<dbReference type="PDBsum" id="5KPV"/>
<dbReference type="PDBsum" id="5KPW"/>
<dbReference type="PDBsum" id="5KPX"/>
<dbReference type="PDBsum" id="5L3P"/>
<dbReference type="PDBsum" id="5LZA"/>
<dbReference type="PDBsum" id="5LZB"/>
<dbReference type="PDBsum" id="5LZC"/>
<dbReference type="PDBsum" id="5LZD"/>
<dbReference type="PDBsum" id="5LZE"/>
<dbReference type="PDBsum" id="5LZF"/>
<dbReference type="PDBsum" id="5MDV"/>
<dbReference type="PDBsum" id="5MDW"/>
<dbReference type="PDBsum" id="5MDY"/>
<dbReference type="PDBsum" id="5MDZ"/>
<dbReference type="PDBsum" id="5ME0"/>
<dbReference type="PDBsum" id="5ME1"/>
<dbReference type="PDBsum" id="5MGP"/>
<dbReference type="PDBsum" id="5MY1"/>
<dbReference type="PDBsum" id="5NO2"/>
<dbReference type="PDBsum" id="5NO3"/>
<dbReference type="PDBsum" id="5NO4"/>
<dbReference type="PDBsum" id="5NP6"/>
<dbReference type="PDBsum" id="5NWY"/>
<dbReference type="PDBsum" id="5O2R"/>
<dbReference type="PDBsum" id="5U4I"/>
<dbReference type="PDBsum" id="5U9F"/>
<dbReference type="PDBsum" id="5U9G"/>
<dbReference type="PDBsum" id="5UYK"/>
<dbReference type="PDBsum" id="5UYL"/>
<dbReference type="PDBsum" id="5UYM"/>
<dbReference type="PDBsum" id="5UYN"/>
<dbReference type="PDBsum" id="5UYP"/>
<dbReference type="PDBsum" id="5UYQ"/>
<dbReference type="PDBsum" id="5UZ4"/>
<dbReference type="PDBsum" id="5WDT"/>
<dbReference type="PDBsum" id="5WE4"/>
<dbReference type="PDBsum" id="5WE6"/>
<dbReference type="PDBsum" id="5WF0"/>
<dbReference type="PDBsum" id="5WFK"/>
<dbReference type="PDBsum" id="5WFS"/>
<dbReference type="PDBsum" id="6AWB"/>
<dbReference type="PDBsum" id="6AWC"/>
<dbReference type="PDBsum" id="6AWD"/>
<dbReference type="PDBsum" id="6BU8"/>
<dbReference type="PDBsum" id="6BY1"/>
<dbReference type="PDBsum" id="6C4I"/>
<dbReference type="PDBsum" id="6DNC"/>
<dbReference type="PDBsum" id="6ENF"/>
<dbReference type="PDBsum" id="6ENJ"/>
<dbReference type="PDBsum" id="6ENU"/>
<dbReference type="PDBsum" id="6GWT"/>
<dbReference type="PDBsum" id="6GXM"/>
<dbReference type="PDBsum" id="6GXN"/>
<dbReference type="PDBsum" id="6GXO"/>
<dbReference type="PDBsum" id="6GXP"/>
<dbReference type="PDBsum" id="6H4N"/>
<dbReference type="PDBsum" id="6H58"/>
<dbReference type="PDBsum" id="6HRM"/>
<dbReference type="PDBsum" id="6NQB"/>
<dbReference type="PDBsum" id="6O7K"/>
<dbReference type="PDBsum" id="6O9J"/>
<dbReference type="PDBsum" id="6O9K"/>
<dbReference type="PDBsum" id="6OFX"/>
<dbReference type="PDBsum" id="6OG7"/>
<dbReference type="PDBsum" id="6OGF"/>
<dbReference type="PDBsum" id="6OGG"/>
<dbReference type="PDBsum" id="6OGI"/>
<dbReference type="PDBsum" id="6OM6"/>
<dbReference type="PDBsum" id="6ORE"/>
<dbReference type="PDBsum" id="6ORL"/>
<dbReference type="PDBsum" id="6OSK"/>
<dbReference type="PDBsum" id="6OSQ"/>
<dbReference type="PDBsum" id="6OST"/>
<dbReference type="PDBsum" id="6OT3"/>
<dbReference type="PDBsum" id="6OUO"/>
<dbReference type="PDBsum" id="6Q97"/>
<dbReference type="PDBsum" id="6Q98"/>
<dbReference type="PDBsum" id="6Q9A"/>
<dbReference type="PDBsum" id="6SZS"/>
<dbReference type="PDBsum" id="6TBV"/>
<dbReference type="PDBsum" id="6TC3"/>
<dbReference type="PDBsum" id="6VU3"/>
<dbReference type="PDBsum" id="6VWL"/>
<dbReference type="PDBsum" id="6VWM"/>
<dbReference type="PDBsum" id="6VWN"/>
<dbReference type="PDBsum" id="6VYQ"/>
<dbReference type="PDBsum" id="6VYR"/>
<dbReference type="PDBsum" id="6VYS"/>
<dbReference type="PDBsum" id="6VYT"/>
<dbReference type="PDBsum" id="6VYU"/>
<dbReference type="PDBsum" id="6VYW"/>
<dbReference type="PDBsum" id="6VYX"/>
<dbReference type="PDBsum" id="6VYY"/>
<dbReference type="PDBsum" id="6VYZ"/>
<dbReference type="PDBsum" id="6VZ2"/>
<dbReference type="PDBsum" id="6VZ3"/>
<dbReference type="PDBsum" id="6VZ5"/>
<dbReference type="PDBsum" id="6VZ7"/>
<dbReference type="PDBsum" id="6VZJ"/>
<dbReference type="PDBsum" id="6W6K"/>
<dbReference type="PDBsum" id="6W77"/>
<dbReference type="PDBsum" id="6W7M"/>
<dbReference type="PDBsum" id="6W7N"/>
<dbReference type="PDBsum" id="6W7W"/>
<dbReference type="PDBsum" id="6WD0"/>
<dbReference type="PDBsum" id="6WD1"/>
<dbReference type="PDBsum" id="6WD2"/>
<dbReference type="PDBsum" id="6WD3"/>
<dbReference type="PDBsum" id="6WD4"/>
<dbReference type="PDBsum" id="6WD5"/>
<dbReference type="PDBsum" id="6WD6"/>
<dbReference type="PDBsum" id="6WD7"/>
<dbReference type="PDBsum" id="6WD8"/>
<dbReference type="PDBsum" id="6WD9"/>
<dbReference type="PDBsum" id="6WDA"/>
<dbReference type="PDBsum" id="6WDB"/>
<dbReference type="PDBsum" id="6WDC"/>
<dbReference type="PDBsum" id="6WDD"/>
<dbReference type="PDBsum" id="6WDE"/>
<dbReference type="PDBsum" id="6WDF"/>
<dbReference type="PDBsum" id="6WDG"/>
<dbReference type="PDBsum" id="6WDH"/>
<dbReference type="PDBsum" id="6WDI"/>
<dbReference type="PDBsum" id="6WDJ"/>
<dbReference type="PDBsum" id="6WDK"/>
<dbReference type="PDBsum" id="6WDL"/>
<dbReference type="PDBsum" id="6WDM"/>
<dbReference type="PDBsum" id="6WNV"/>
<dbReference type="PDBsum" id="6WNW"/>
<dbReference type="PDBsum" id="6X6T"/>
<dbReference type="PDBsum" id="6X7F"/>
<dbReference type="PDBsum" id="6X7K"/>
<dbReference type="PDBsum" id="6X9Q"/>
<dbReference type="PDBsum" id="6XDQ"/>
<dbReference type="PDBsum" id="6XDR"/>
<dbReference type="PDBsum" id="6XE0"/>
<dbReference type="PDBsum" id="6XGF"/>
<dbReference type="PDBsum" id="6XII"/>
<dbReference type="PDBsum" id="6XIJ"/>
<dbReference type="PDBsum" id="6XZA"/>
<dbReference type="PDBsum" id="6XZB"/>
<dbReference type="PDBsum" id="6Y69"/>
<dbReference type="PDBsum" id="6ZTJ"/>
<dbReference type="PDBsum" id="6ZTL"/>
<dbReference type="PDBsum" id="6ZTM"/>
<dbReference type="PDBsum" id="6ZTN"/>
<dbReference type="PDBsum" id="6ZTO"/>
<dbReference type="PDBsum" id="6ZTP"/>
<dbReference type="PDBsum" id="6ZU1"/>
<dbReference type="PDBsum" id="7ABZ"/>
<dbReference type="PDBsum" id="7AC7"/>
<dbReference type="PDBsum" id="7ACJ"/>
<dbReference type="PDBsum" id="7ACR"/>
<dbReference type="PDBsum" id="7AFI"/>
<dbReference type="PDBsum" id="7AFL"/>
<dbReference type="PDBsum" id="7AFO"/>
<dbReference type="PDBsum" id="7B5K"/>
<dbReference type="PDBsum" id="7BOD"/>
<dbReference type="PDBsum" id="7BOE"/>
<dbReference type="PDBsum" id="7BOF"/>
<dbReference type="PDBsum" id="7BOG"/>
<dbReference type="PDBsum" id="7BOH"/>
<dbReference type="PDBsum" id="7BOI"/>
<dbReference type="PDBsum" id="7D6Z"/>
<dbReference type="PDBsum" id="7D80"/>
<dbReference type="PDBsum" id="7JSS"/>
<dbReference type="PDBsum" id="7JSW"/>
<dbReference type="PDBsum" id="7JSZ"/>
<dbReference type="PDBsum" id="7JT1"/>
<dbReference type="PDBsum" id="7JT2"/>
<dbReference type="PDBsum" id="7JT3"/>
<dbReference type="PDBsum" id="7K00"/>
<dbReference type="PDBsum" id="7K50"/>
<dbReference type="PDBsum" id="7K51"/>
<dbReference type="PDBsum" id="7K52"/>
<dbReference type="PDBsum" id="7K53"/>
<dbReference type="PDBsum" id="7K54"/>
<dbReference type="PDBsum" id="7K55"/>
<dbReference type="PDBsum" id="7LV0"/>
<dbReference type="PDBsum" id="7M5D"/>
<dbReference type="PDBsum" id="7N1P"/>
<dbReference type="PDBsum" id="7N2C"/>
<dbReference type="PDBsum" id="7N2U"/>
<dbReference type="PDBsum" id="7N2V"/>
<dbReference type="PDBsum" id="7N30"/>
<dbReference type="PDBsum" id="7N31"/>
<dbReference type="PDBsum" id="7NAR"/>
<dbReference type="PDBsum" id="7NAS"/>
<dbReference type="PDBsum" id="7NAT"/>
<dbReference type="PDBsum" id="7NAU"/>
<dbReference type="PDBsum" id="7NAV"/>
<dbReference type="PDBsum" id="7NAX"/>
<dbReference type="PDBsum" id="7NBU"/>
<dbReference type="PDBsum" id="7O19"/>
<dbReference type="PDBsum" id="7O1A"/>
<dbReference type="PDBsum" id="7O1C"/>
<dbReference type="PDBsum" id="7O5H"/>
<dbReference type="PDBsum" id="7OE0"/>
<dbReference type="PDBsum" id="7OE1"/>
<dbReference type="PDBsum" id="7OI0"/>
<dbReference type="PDBsum" id="7OIZ"/>
<dbReference type="PDBsum" id="7OJ0"/>
<dbReference type="PDBsum" id="7P3K"/>
<dbReference type="PDBsum" id="7PJV"/>
<dbReference type="PDBsum" id="7PJY"/>
<dbReference type="PDBsum" id="7QG8"/>
<dbReference type="PDBsum" id="7QGH"/>
<dbReference type="PDBsum" id="7QGN"/>
<dbReference type="PDBsum" id="7QGR"/>
<dbReference type="PDBsum" id="7S1G"/>
<dbReference type="PDBsum" id="7S1H"/>
<dbReference type="PDBsum" id="7S1I"/>
<dbReference type="PDBsum" id="7S1J"/>
<dbReference type="PDBsum" id="7S1K"/>
<dbReference type="PDBsum" id="7SA4"/>
<dbReference type="PDBsum" id="7SS9"/>
<dbReference type="PDBsum" id="7SSD"/>
<dbReference type="PDBsum" id="7SSL"/>
<dbReference type="PDBsum" id="7SSN"/>
<dbReference type="PDBsum" id="7SSO"/>
<dbReference type="PDBsum" id="7SSW"/>
<dbReference type="PDBsum" id="7ST2"/>
<dbReference type="PDBsum" id="7ST6"/>
<dbReference type="PDBsum" id="7ST7"/>
<dbReference type="PDBsum" id="7TOS"/>
<dbReference type="PDBsum" id="7UG7"/>
<dbReference type="PDBsum" id="7UPH"/>
<dbReference type="PDBsum" id="7Y7C"/>
<dbReference type="PDBsum" id="7Y7D"/>
<dbReference type="PDBsum" id="7Y7E"/>
<dbReference type="PDBsum" id="7Y7F"/>
<dbReference type="PDBsum" id="7Y7G"/>
<dbReference type="PDBsum" id="7Y7H"/>
<dbReference type="PDBsum" id="7ZTA"/>
<dbReference type="PDBsum" id="8A3L"/>
<dbReference type="PDBsum" id="8AKN"/>
<dbReference type="PDBsum" id="8AM9"/>
<dbReference type="PDBsum" id="8AYE"/>
<dbReference type="PDBsum" id="8B0X"/>
<dbReference type="PDBsum" id="8B7Y"/>
<dbReference type="PDBsum" id="8BD5"/>
<dbReference type="PDBsum" id="8BF7"/>
<dbReference type="PDBsum" id="8BGE"/>
<dbReference type="PDBsum" id="8BGH"/>
<dbReference type="PDBsum" id="8BH4"/>
<dbReference type="PDBsum" id="8BHJ"/>
<dbReference type="PDBsum" id="8BHL"/>
<dbReference type="PDBsum" id="8BHN"/>
<dbReference type="PDBsum" id="8BHP"/>
<dbReference type="PDBsum" id="8BIL"/>
<dbReference type="PDBsum" id="8BIM"/>
<dbReference type="PDBsum" id="8CAI"/>
<dbReference type="PDBsum" id="8CEP"/>
<dbReference type="PDBsum" id="8CGJ"/>
<dbReference type="PDBsum" id="8CGR"/>
<dbReference type="PDBsum" id="8CGU"/>
<dbReference type="PDBsum" id="8EA3"/>
<dbReference type="PDBsum" id="8EA4"/>
<dbReference type="PDBsum" id="8EIU"/>
<dbReference type="PDBsum" id="8EKC"/>
<dbReference type="PDBsum" id="8EMM"/>
<dbReference type="PDBsum" id="8EYQ"/>
<dbReference type="PDBsum" id="8EYT"/>
<dbReference type="PDBsum" id="8FIZ"/>
<dbReference type="PDBsum" id="8FTO"/>
<dbReference type="PDBsum" id="8FZD"/>
<dbReference type="PDBsum" id="8FZE"/>
<dbReference type="PDBsum" id="8FZF"/>
<dbReference type="PDBsum" id="8FZG"/>
<dbReference type="PDBsum" id="8FZH"/>
<dbReference type="PDBsum" id="8FZI"/>
<dbReference type="PDBsum" id="8FZJ"/>
<dbReference type="PDBsum" id="8G2U"/>
<dbReference type="PDBsum" id="8G31"/>
<dbReference type="PDBsum" id="8G34"/>
<dbReference type="PDBsum" id="8G38"/>
<dbReference type="PDBsum" id="8G6W"/>
<dbReference type="PDBsum" id="8G7P"/>
<dbReference type="PDBsum" id="8G7Q"/>
<dbReference type="PDBsum" id="8G7R"/>
<dbReference type="PDBsum" id="8G7S"/>
<dbReference type="PDBsum" id="8GHU"/>
<dbReference type="PDBsum" id="8HSP"/>
<dbReference type="PDBsum" id="8HTZ"/>
<dbReference type="PDBsum" id="8HU1"/>
<dbReference type="PDBsum" id="8IFB"/>
<dbReference type="PDBsum" id="8IFC"/>
<dbReference type="PDBsum" id="8JSG"/>
<dbReference type="PDBsum" id="8JSH"/>
<dbReference type="PDBsum" id="8K3O"/>
<dbReference type="PDBsum" id="8K4E"/>
<dbReference type="PDBsum" id="8P16"/>
<dbReference type="PDBsum" id="8P17"/>
<dbReference type="PDBsum" id="8P18"/>
<dbReference type="PDBsum" id="8PEG"/>
<dbReference type="PDBsum" id="8PHJ"/>
<dbReference type="PDBsum" id="8PKL"/>
<dbReference type="PDBsum" id="8PVA"/>
<dbReference type="PDBsum" id="8Q4F"/>
<dbReference type="PDBsum" id="8QBT"/>
<dbReference type="PDBsum" id="8QK7"/>
<dbReference type="PDBsum" id="8QOA"/>
<dbReference type="PDBsum" id="8R3V"/>
<dbReference type="PDBsum" id="8R6C"/>
<dbReference type="PDBsum" id="8R8M"/>
<dbReference type="PDBsum" id="8RCL"/>
<dbReference type="PDBsum" id="8RCM"/>
<dbReference type="PDBsum" id="8RCS"/>
<dbReference type="PDBsum" id="8RCT"/>
<dbReference type="PDBsum" id="8SYL"/>
<dbReference type="PDBsum" id="8T5D"/>
<dbReference type="PDBsum" id="8T5H"/>
<dbReference type="PDBsum" id="8UPO"/>
<dbReference type="PDBsum" id="8UPR"/>
<dbReference type="PDBsum" id="8UQL"/>
<dbReference type="PDBsum" id="8UQM"/>
<dbReference type="PDBsum" id="8UQP"/>
<dbReference type="PDBsum" id="8UR0"/>
<dbReference type="PDBsum" id="8URH"/>
<dbReference type="PDBsum" id="8URI"/>
<dbReference type="PDBsum" id="8URX"/>
<dbReference type="PDBsum" id="8URY"/>
<dbReference type="PDBsum" id="8VS9"/>
<dbReference type="PDBsum" id="8VSA"/>
<dbReference type="PDBsum" id="8YUO"/>
<dbReference type="PDBsum" id="8YUP"/>
<dbReference type="PDBsum" id="8YUQ"/>
<dbReference type="PDBsum" id="8YUR"/>
<dbReference type="PDBsum" id="8YUS"/>
<dbReference type="PDBsum" id="9DUK"/>
<dbReference type="PDBsum" id="9DUL"/>
<dbReference type="PDBsum" id="9FBV"/>
<dbReference type="PDBsum" id="9GFT"/>
<dbReference type="PDBsum" id="9GGR"/>
<dbReference type="PDBsum" id="9GUP"/>
<dbReference type="PDBsum" id="9GUQ"/>
<dbReference type="PDBsum" id="9GUS"/>
<dbReference type="PDBsum" id="9GUT"/>
<dbReference type="PDBsum" id="9GUU"/>
<dbReference type="PDBsum" id="9GUV"/>
<dbReference type="PDBsum" id="9GUW"/>
<dbReference type="PDBsum" id="9GUX"/>
<dbReference type="PDBsum" id="9MOR"/>
<dbReference type="PDBsum" id="9MQ4"/>
<dbReference type="EMDB" id="EMD-0076"/>
<dbReference type="EMDB" id="EMD-0080"/>
<dbReference type="EMDB" id="EMD-0081"/>
<dbReference type="EMDB" id="EMD-0082"/>
<dbReference type="EMDB" id="EMD-0083"/>
<dbReference type="EMDB" id="EMD-0137"/>
<dbReference type="EMDB" id="EMD-0139"/>
<dbReference type="EMDB" id="EMD-0261"/>
<dbReference type="EMDB" id="EMD-10353"/>
<dbReference type="EMDB" id="EMD-10453"/>
<dbReference type="EMDB" id="EMD-10458"/>
<dbReference type="EMDB" id="EMD-10656"/>
<dbReference type="EMDB" id="EMD-10657"/>
<dbReference type="EMDB" id="EMD-10705"/>
<dbReference type="EMDB" id="EMD-11419"/>
<dbReference type="EMDB" id="EMD-11710"/>
<dbReference type="EMDB" id="EMD-11713"/>
<dbReference type="EMDB" id="EMD-11717"/>
<dbReference type="EMDB" id="EMD-11718"/>
<dbReference type="EMDB" id="EMD-12035"/>
<dbReference type="EMDB" id="EMD-12239"/>
<dbReference type="EMDB" id="EMD-12240"/>
<dbReference type="EMDB" id="EMD-12241"/>
<dbReference type="EMDB" id="EMD-12242"/>
<dbReference type="EMDB" id="EMD-12243"/>
<dbReference type="EMDB" id="EMD-12244"/>
<dbReference type="EMDB" id="EMD-12245"/>
<dbReference type="EMDB" id="EMD-12246"/>
<dbReference type="EMDB" id="EMD-12247"/>
<dbReference type="EMDB" id="EMD-12248"/>
<dbReference type="EMDB" id="EMD-12249"/>
<dbReference type="EMDB" id="EMD-12261"/>
<dbReference type="EMDB" id="EMD-12693"/>
<dbReference type="EMDB" id="EMD-12694"/>
<dbReference type="EMDB" id="EMD-12695"/>
<dbReference type="EMDB" id="EMD-12936"/>
<dbReference type="EMDB" id="EMD-12937"/>
<dbReference type="EMDB" id="EMD-13180"/>
<dbReference type="EMDB" id="EMD-13461"/>
<dbReference type="EMDB" id="EMD-13464"/>
<dbReference type="EMDB" id="EMD-1391"/>
<dbReference type="EMDB" id="EMD-13952"/>
<dbReference type="EMDB" id="EMD-13955"/>
<dbReference type="EMDB" id="EMD-13958"/>
<dbReference type="EMDB" id="EMD-14956"/>
<dbReference type="EMDB" id="EMD-15116"/>
<dbReference type="EMDB" id="EMD-15712"/>
<dbReference type="EMDB" id="EMD-15793"/>
<dbReference type="EMDB" id="EMD-15905"/>
<dbReference type="EMDB" id="EMD-15975"/>
<dbReference type="EMDB" id="EMD-16015"/>
<dbReference type="EMDB" id="EMD-16029"/>
<dbReference type="EMDB" id="EMD-16031"/>
<dbReference type="EMDB" id="EMD-16047"/>
<dbReference type="EMDB" id="EMD-16057"/>
<dbReference type="EMDB" id="EMD-16059"/>
<dbReference type="EMDB" id="EMD-16062"/>
<dbReference type="EMDB" id="EMD-16065"/>
<dbReference type="EMDB" id="EMD-16081"/>
<dbReference type="EMDB" id="EMD-16082"/>
<dbReference type="EMDB" id="EMD-16526"/>
<dbReference type="EMDB" id="EMD-16612"/>
<dbReference type="EMDB" id="EMD-16645"/>
<dbReference type="EMDB" id="EMD-16650"/>
<dbReference type="EMDB" id="EMD-16651"/>
<dbReference type="EMDB" id="EMD-17346"/>
<dbReference type="EMDB" id="EMD-17347"/>
<dbReference type="EMDB" id="EMD-17348"/>
<dbReference type="EMDB" id="EMD-17631"/>
<dbReference type="EMDB" id="EMD-17667"/>
<dbReference type="EMDB" id="EMD-17743"/>
<dbReference type="EMDB" id="EMD-17959"/>
<dbReference type="EMDB" id="EMD-18145"/>
<dbReference type="EMDB" id="EMD-18320"/>
<dbReference type="EMDB" id="EMD-18458"/>
<dbReference type="EMDB" id="EMD-18534"/>
<dbReference type="EMDB" id="EMD-18875"/>
<dbReference type="EMDB" id="EMD-18950"/>
<dbReference type="EMDB" id="EMD-19004"/>
<dbReference type="EMDB" id="EMD-19054"/>
<dbReference type="EMDB" id="EMD-19055"/>
<dbReference type="EMDB" id="EMD-19058"/>
<dbReference type="EMDB" id="EMD-19059"/>
<dbReference type="EMDB" id="EMD-20048"/>
<dbReference type="EMDB" id="EMD-20052"/>
<dbReference type="EMDB" id="EMD-21420"/>
<dbReference type="EMDB" id="EMD-21421"/>
<dbReference type="EMDB" id="EMD-21422"/>
<dbReference type="EMDB" id="EMD-21569"/>
<dbReference type="EMDB" id="EMD-21571"/>
<dbReference type="EMDB" id="EMD-21625"/>
<dbReference type="EMDB" id="EMD-21630"/>
<dbReference type="EMDB" id="EMD-21631"/>
<dbReference type="EMDB" id="EMD-21632"/>
<dbReference type="EMDB" id="EMD-21633"/>
<dbReference type="EMDB" id="EMD-21634"/>
<dbReference type="EMDB" id="EMD-21635"/>
<dbReference type="EMDB" id="EMD-21636"/>
<dbReference type="EMDB" id="EMD-21637"/>
<dbReference type="EMDB" id="EMD-21638"/>
<dbReference type="EMDB" id="EMD-21639"/>
<dbReference type="EMDB" id="EMD-21640"/>
<dbReference type="EMDB" id="EMD-21641"/>
<dbReference type="EMDB" id="EMD-21857"/>
<dbReference type="EMDB" id="EMD-21858"/>
<dbReference type="EMDB" id="EMD-22143"/>
<dbReference type="EMDB" id="EMD-22459"/>
<dbReference type="EMDB" id="EMD-22461"/>
<dbReference type="EMDB" id="EMD-22464"/>
<dbReference type="EMDB" id="EMD-22466"/>
<dbReference type="EMDB" id="EMD-22469"/>
<dbReference type="EMDB" id="EMD-22472"/>
<dbReference type="EMDB" id="EMD-22669"/>
<dbReference type="EMDB" id="EMD-22670"/>
<dbReference type="EMDB" id="EMD-22671"/>
<dbReference type="EMDB" id="EMD-22672"/>
<dbReference type="EMDB" id="EMD-22673"/>
<dbReference type="EMDB" id="EMD-22674"/>
<dbReference type="EMDB" id="EMD-23528"/>
<dbReference type="EMDB" id="EMD-24120"/>
<dbReference type="EMDB" id="EMD-24132"/>
<dbReference type="EMDB" id="EMD-24133"/>
<dbReference type="EMDB" id="EMD-24134"/>
<dbReference type="EMDB" id="EMD-24135"/>
<dbReference type="EMDB" id="EMD-24136"/>
<dbReference type="EMDB" id="EMD-24803"/>
<dbReference type="EMDB" id="EMD-25405"/>
<dbReference type="EMDB" id="EMD-25407"/>
<dbReference type="EMDB" id="EMD-25409"/>
<dbReference type="EMDB" id="EMD-25410"/>
<dbReference type="EMDB" id="EMD-25411"/>
<dbReference type="EMDB" id="EMD-25415"/>
<dbReference type="EMDB" id="EMD-25418"/>
<dbReference type="EMDB" id="EMD-25420"/>
<dbReference type="EMDB" id="EMD-25421"/>
<dbReference type="EMDB" id="EMD-30598"/>
<dbReference type="EMDB" id="EMD-30611"/>
<dbReference type="EMDB" id="EMD-33660"/>
<dbReference type="EMDB" id="EMD-33661"/>
<dbReference type="EMDB" id="EMD-33662"/>
<dbReference type="EMDB" id="EMD-33663"/>
<dbReference type="EMDB" id="EMD-33664"/>
<dbReference type="EMDB" id="EMD-33665"/>
<dbReference type="EMDB" id="EMD-3489"/>
<dbReference type="EMDB" id="EMD-3490"/>
<dbReference type="EMDB" id="EMD-3492"/>
<dbReference type="EMDB" id="EMD-3493"/>
<dbReference type="EMDB" id="EMD-3494"/>
<dbReference type="EMDB" id="EMD-3495"/>
<dbReference type="EMDB" id="EMD-35001"/>
<dbReference type="EMDB" id="EMD-35020"/>
<dbReference type="EMDB" id="EMD-35022"/>
<dbReference type="EMDB" id="EMD-3508"/>
<dbReference type="EMDB" id="EMD-35411"/>
<dbReference type="EMDB" id="EMD-35412"/>
<dbReference type="EMDB" id="EMD-3580"/>
<dbReference type="EMDB" id="EMD-3661"/>
<dbReference type="EMDB" id="EMD-36619"/>
<dbReference type="EMDB" id="EMD-3662"/>
<dbReference type="EMDB" id="EMD-36620"/>
<dbReference type="EMDB" id="EMD-3663"/>
<dbReference type="EMDB" id="EMD-36854"/>
<dbReference type="EMDB" id="EMD-36883"/>
<dbReference type="EMDB" id="EMD-3713"/>
<dbReference type="EMDB" id="EMD-3730"/>
<dbReference type="EMDB" id="EMD-3898"/>
<dbReference type="EMDB" id="EMD-3899"/>
<dbReference type="EMDB" id="EMD-3903"/>
<dbReference type="EMDB" id="EMD-39577"/>
<dbReference type="EMDB" id="EMD-39578"/>
<dbReference type="EMDB" id="EMD-39579"/>
<dbReference type="EMDB" id="EMD-39580"/>
<dbReference type="EMDB" id="EMD-39581"/>
<dbReference type="EMDB" id="EMD-4001"/>
<dbReference type="EMDB" id="EMD-4121"/>
<dbReference type="EMDB" id="EMD-4122"/>
<dbReference type="EMDB" id="EMD-4123"/>
<dbReference type="EMDB" id="EMD-4124"/>
<dbReference type="EMDB" id="EMD-4125"/>
<dbReference type="EMDB" id="EMD-4126"/>
<dbReference type="EMDB" id="EMD-4476"/>
<dbReference type="EMDB" id="EMD-4477"/>
<dbReference type="EMDB" id="EMD-4478"/>
<dbReference type="EMDB" id="EMD-50296"/>
<dbReference type="EMDB" id="EMD-51318"/>
<dbReference type="EMDB" id="EMD-51340"/>
<dbReference type="EMDB" id="EMD-51615"/>
<dbReference type="EMDB" id="EMD-51616"/>
<dbReference type="EMDB" id="EMD-51618"/>
<dbReference type="EMDB" id="EMD-51619"/>
<dbReference type="EMDB" id="EMD-51620"/>
<dbReference type="EMDB" id="EMD-51621"/>
<dbReference type="EMDB" id="EMD-51622"/>
<dbReference type="EMDB" id="EMD-51623"/>
<dbReference type="EMDB" id="EMD-6667"/>
<dbReference type="EMDB" id="EMD-7289"/>
<dbReference type="EMDB" id="EMD-7341"/>
<dbReference type="EMDB" id="EMD-8107"/>
<dbReference type="EMDB" id="EMD-8175"/>
<dbReference type="EMDB" id="EMD-8176"/>
<dbReference type="EMDB" id="EMD-8237"/>
<dbReference type="EMDB" id="EMD-8238"/>
<dbReference type="EMDB" id="EMD-8279"/>
<dbReference type="EMDB" id="EMD-8280"/>
<dbReference type="EMDB" id="EMD-8281"/>
<dbReference type="EMDB" id="EMD-8282"/>
<dbReference type="EMDB" id="EMD-8505"/>
<dbReference type="EMDB" id="EMD-8615"/>
<dbReference type="EMDB" id="EMD-8616"/>
<dbReference type="EMDB" id="EMD-8617"/>
<dbReference type="EMDB" id="EMD-8618"/>
<dbReference type="EMDB" id="EMD-8619"/>
<dbReference type="EMDB" id="EMD-8620"/>
<dbReference type="EMDB" id="EMD-8813"/>
<dbReference type="EMDB" id="EMD-8814"/>
<dbReference type="EMDB" id="EMD-8815"/>
<dbReference type="EMDB" id="EMD-8828"/>
<dbReference type="SMR" id="P0ADZ4"/>
<dbReference type="BioGRID" id="4262433">
    <property type="interactions" value="16"/>
</dbReference>
<dbReference type="BioGRID" id="851999">
    <property type="interactions" value="1"/>
</dbReference>
<dbReference type="ComplexPortal" id="CPX-3802">
    <property type="entry name" value="30S small ribosomal subunit"/>
</dbReference>
<dbReference type="DIP" id="DIP-47909N"/>
<dbReference type="FunCoup" id="P0ADZ4">
    <property type="interactions" value="692"/>
</dbReference>
<dbReference type="IntAct" id="P0ADZ4">
    <property type="interactions" value="45"/>
</dbReference>
<dbReference type="STRING" id="511145.b3165"/>
<dbReference type="jPOST" id="P0ADZ4"/>
<dbReference type="PaxDb" id="511145-b3165"/>
<dbReference type="EnsemblBacteria" id="AAC76199">
    <property type="protein sequence ID" value="AAC76199"/>
    <property type="gene ID" value="b3165"/>
</dbReference>
<dbReference type="GeneID" id="93778818"/>
<dbReference type="GeneID" id="947686"/>
<dbReference type="KEGG" id="ecj:JW3134"/>
<dbReference type="KEGG" id="eco:b3165"/>
<dbReference type="KEGG" id="ecoc:C3026_17240"/>
<dbReference type="PATRIC" id="fig|1411691.4.peg.3565"/>
<dbReference type="EchoBASE" id="EB0907"/>
<dbReference type="eggNOG" id="COG0184">
    <property type="taxonomic scope" value="Bacteria"/>
</dbReference>
<dbReference type="HOGENOM" id="CLU_148518_0_0_6"/>
<dbReference type="InParanoid" id="P0ADZ4"/>
<dbReference type="OMA" id="RINYLTE"/>
<dbReference type="OrthoDB" id="9799262at2"/>
<dbReference type="PhylomeDB" id="P0ADZ4"/>
<dbReference type="BioCyc" id="EcoCyc:EG10914-MONOMER"/>
<dbReference type="BioCyc" id="MetaCyc:EG10914-MONOMER"/>
<dbReference type="EvolutionaryTrace" id="P0ADZ4"/>
<dbReference type="PRO" id="PR:P0ADZ4"/>
<dbReference type="Proteomes" id="UP000000625">
    <property type="component" value="Chromosome"/>
</dbReference>
<dbReference type="GO" id="GO:0005737">
    <property type="term" value="C:cytoplasm"/>
    <property type="evidence" value="ECO:0000314"/>
    <property type="project" value="ComplexPortal"/>
</dbReference>
<dbReference type="GO" id="GO:0005829">
    <property type="term" value="C:cytosol"/>
    <property type="evidence" value="ECO:0000314"/>
    <property type="project" value="EcoCyc"/>
</dbReference>
<dbReference type="GO" id="GO:0022627">
    <property type="term" value="C:cytosolic small ribosomal subunit"/>
    <property type="evidence" value="ECO:0000314"/>
    <property type="project" value="CAFA"/>
</dbReference>
<dbReference type="GO" id="GO:0019843">
    <property type="term" value="F:rRNA binding"/>
    <property type="evidence" value="ECO:0000314"/>
    <property type="project" value="EcoliWiki"/>
</dbReference>
<dbReference type="GO" id="GO:0070181">
    <property type="term" value="F:small ribosomal subunit rRNA binding"/>
    <property type="evidence" value="ECO:0000314"/>
    <property type="project" value="EcoCyc"/>
</dbReference>
<dbReference type="GO" id="GO:0003735">
    <property type="term" value="F:structural constituent of ribosome"/>
    <property type="evidence" value="ECO:0000314"/>
    <property type="project" value="CAFA"/>
</dbReference>
<dbReference type="GO" id="GO:0002181">
    <property type="term" value="P:cytoplasmic translation"/>
    <property type="evidence" value="ECO:0000303"/>
    <property type="project" value="ComplexPortal"/>
</dbReference>
<dbReference type="GO" id="GO:0006417">
    <property type="term" value="P:regulation of translation"/>
    <property type="evidence" value="ECO:0007669"/>
    <property type="project" value="UniProtKB-KW"/>
</dbReference>
<dbReference type="GO" id="GO:0000028">
    <property type="term" value="P:ribosomal small subunit assembly"/>
    <property type="evidence" value="ECO:0000314"/>
    <property type="project" value="CAFA"/>
</dbReference>
<dbReference type="GO" id="GO:0006412">
    <property type="term" value="P:translation"/>
    <property type="evidence" value="ECO:0000315"/>
    <property type="project" value="EcoCyc"/>
</dbReference>
<dbReference type="CDD" id="cd00353">
    <property type="entry name" value="Ribosomal_S15p_S13e"/>
    <property type="match status" value="1"/>
</dbReference>
<dbReference type="FunFam" id="1.10.287.10:FF:000002">
    <property type="entry name" value="30S ribosomal protein S15"/>
    <property type="match status" value="1"/>
</dbReference>
<dbReference type="Gene3D" id="6.10.250.3130">
    <property type="match status" value="1"/>
</dbReference>
<dbReference type="Gene3D" id="1.10.287.10">
    <property type="entry name" value="S15/NS1, RNA-binding"/>
    <property type="match status" value="1"/>
</dbReference>
<dbReference type="HAMAP" id="MF_01343_B">
    <property type="entry name" value="Ribosomal_uS15_B"/>
    <property type="match status" value="1"/>
</dbReference>
<dbReference type="InterPro" id="IPR000589">
    <property type="entry name" value="Ribosomal_uS15"/>
</dbReference>
<dbReference type="InterPro" id="IPR005290">
    <property type="entry name" value="Ribosomal_uS15_bac-type"/>
</dbReference>
<dbReference type="InterPro" id="IPR009068">
    <property type="entry name" value="uS15_NS1_RNA-bd_sf"/>
</dbReference>
<dbReference type="NCBIfam" id="TIGR00952">
    <property type="entry name" value="S15_bact"/>
    <property type="match status" value="1"/>
</dbReference>
<dbReference type="PANTHER" id="PTHR23321">
    <property type="entry name" value="RIBOSOMAL PROTEIN S15, BACTERIAL AND ORGANELLAR"/>
    <property type="match status" value="1"/>
</dbReference>
<dbReference type="PANTHER" id="PTHR23321:SF26">
    <property type="entry name" value="SMALL RIBOSOMAL SUBUNIT PROTEIN US15M"/>
    <property type="match status" value="1"/>
</dbReference>
<dbReference type="Pfam" id="PF00312">
    <property type="entry name" value="Ribosomal_S15"/>
    <property type="match status" value="1"/>
</dbReference>
<dbReference type="SMART" id="SM01387">
    <property type="entry name" value="Ribosomal_S15"/>
    <property type="match status" value="1"/>
</dbReference>
<dbReference type="SUPFAM" id="SSF47060">
    <property type="entry name" value="S15/NS1 RNA-binding domain"/>
    <property type="match status" value="1"/>
</dbReference>
<dbReference type="PROSITE" id="PS00362">
    <property type="entry name" value="RIBOSOMAL_S15"/>
    <property type="match status" value="1"/>
</dbReference>
<name>RS15_ECOLI</name>
<reference key="1">
    <citation type="journal article" date="1984" name="Mol. Gen. Genet.">
        <title>Nucleotide sequence of the gene for Escherichia coli ribosomal protein S15 (rpsO).</title>
        <authorList>
            <person name="Takata R."/>
            <person name="Mukai T."/>
            <person name="Aoyagi M."/>
            <person name="Hori K."/>
        </authorList>
    </citation>
    <scope>NUCLEOTIDE SEQUENCE [GENOMIC DNA]</scope>
</reference>
<reference key="2">
    <citation type="journal article" date="1984" name="Nucleic Acids Res.">
        <title>Expression of the rpsO and pnp genes: structural analysis of a DNA fragment carrying their control regions.</title>
        <authorList>
            <person name="Portier C."/>
            <person name="Regnier P."/>
        </authorList>
    </citation>
    <scope>NUCLEOTIDE SEQUENCE [GENOMIC DNA]</scope>
</reference>
<reference key="3">
    <citation type="journal article" date="1985" name="Gene">
        <title>Promoter activity and transcript mapping in the regulatory region for genes encoding ribosomal protein S15 and polynucleotide phosphorylase of Escherichia coli.</title>
        <authorList>
            <person name="Evans S."/>
            <person name="Dennis P.P."/>
        </authorList>
    </citation>
    <scope>NUCLEOTIDE SEQUENCE [GENOMIC DNA]</scope>
</reference>
<reference key="4">
    <citation type="journal article" date="1987" name="J. Biol. Chem.">
        <title>Nucleotide sequence of the pnp gene of Escherichia coli encoding polynucleotide phosphorylase. Homology of the primary structure of the protein with the RNA-binding domain of ribosomal protein S1.</title>
        <authorList>
            <person name="Regnier P."/>
            <person name="Grunberg-Manago M."/>
            <person name="Portier C."/>
        </authorList>
    </citation>
    <scope>NUCLEOTIDE SEQUENCE [GENOMIC DNA]</scope>
</reference>
<reference key="5">
    <citation type="journal article" date="1997" name="Science">
        <title>The complete genome sequence of Escherichia coli K-12.</title>
        <authorList>
            <person name="Blattner F.R."/>
            <person name="Plunkett G. III"/>
            <person name="Bloch C.A."/>
            <person name="Perna N.T."/>
            <person name="Burland V."/>
            <person name="Riley M."/>
            <person name="Collado-Vides J."/>
            <person name="Glasner J.D."/>
            <person name="Rode C.K."/>
            <person name="Mayhew G.F."/>
            <person name="Gregor J."/>
            <person name="Davis N.W."/>
            <person name="Kirkpatrick H.A."/>
            <person name="Goeden M.A."/>
            <person name="Rose D.J."/>
            <person name="Mau B."/>
            <person name="Shao Y."/>
        </authorList>
    </citation>
    <scope>NUCLEOTIDE SEQUENCE [LARGE SCALE GENOMIC DNA]</scope>
    <source>
        <strain>K12 / MG1655 / ATCC 47076</strain>
    </source>
</reference>
<reference key="6">
    <citation type="journal article" date="2006" name="Mol. Syst. Biol.">
        <title>Highly accurate genome sequences of Escherichia coli K-12 strains MG1655 and W3110.</title>
        <authorList>
            <person name="Hayashi K."/>
            <person name="Morooka N."/>
            <person name="Yamamoto Y."/>
            <person name="Fujita K."/>
            <person name="Isono K."/>
            <person name="Choi S."/>
            <person name="Ohtsubo E."/>
            <person name="Baba T."/>
            <person name="Wanner B.L."/>
            <person name="Mori H."/>
            <person name="Horiuchi T."/>
        </authorList>
    </citation>
    <scope>NUCLEOTIDE SEQUENCE [LARGE SCALE GENOMIC DNA]</scope>
    <source>
        <strain>K12 / W3110 / ATCC 27325 / DSM 5911</strain>
    </source>
</reference>
<reference key="7">
    <citation type="journal article" date="1976" name="FEBS Lett.">
        <title>Primary structure of the 16S rRNA binding protein S15 from Escherichia coli ribosomes.</title>
        <authorList>
            <person name="Morinaga T."/>
            <person name="Funatsu G."/>
            <person name="Funatsu M."/>
            <person name="Wittmann H.G."/>
        </authorList>
    </citation>
    <scope>PROTEIN SEQUENCE OF 2-89</scope>
    <scope>SUBUNIT</scope>
    <source>
        <strain>K</strain>
    </source>
</reference>
<reference key="8">
    <citation type="journal article" date="1988" name="Nucleic Acids Res.">
        <title>The existence of two genes between infB and rpsO in the Escherichia coli genome: DNA sequencing and S1 nuclease mapping.</title>
        <authorList>
            <person name="Sands J.F."/>
            <person name="Regnier P."/>
            <person name="Cummings H.S."/>
            <person name="Grunberg-Manago M."/>
            <person name="Hershey J.W.B."/>
        </authorList>
    </citation>
    <scope>NUCLEOTIDE SEQUENCE [GENOMIC DNA] OF 1-40</scope>
    <scope>INDUCTION</scope>
    <scope>OPERON</scope>
    <source>
        <strain>12</strain>
    </source>
</reference>
<reference key="9">
    <citation type="journal article" date="1997" name="Electrophoresis">
        <title>Escherichia coli proteome analysis using the gene-protein database.</title>
        <authorList>
            <person name="VanBogelen R.A."/>
            <person name="Abshire K.Z."/>
            <person name="Moldover B."/>
            <person name="Olson E.R."/>
            <person name="Neidhardt F.C."/>
        </authorList>
    </citation>
    <scope>IDENTIFICATION BY 2D-GEL</scope>
</reference>
<reference key="10">
    <citation type="journal article" date="1999" name="Anal. Biochem.">
        <title>Observation of Escherichia coli ribosomal proteins and their posttranslational modifications by mass spectrometry.</title>
        <authorList>
            <person name="Arnold R.J."/>
            <person name="Reilly J.P."/>
        </authorList>
    </citation>
    <scope>MASS SPECTROMETRY</scope>
    <scope>SUBUNIT</scope>
    <source>
        <strain>K12 / ATCC 25404 / DSM 5698 / NCIMB 11290</strain>
    </source>
</reference>
<reference key="11">
    <citation type="journal article" date="2013" name="PLoS Biol.">
        <title>Escherichia coli ribosomal protein S1 unfolds structured mRNAs onto the ribosome for active translation initiation.</title>
        <authorList>
            <person name="Duval M."/>
            <person name="Korepanov A."/>
            <person name="Fuchsbauer O."/>
            <person name="Fechter P."/>
            <person name="Haller A."/>
            <person name="Fabbretti A."/>
            <person name="Choulier L."/>
            <person name="Micura R."/>
            <person name="Klaholz B.P."/>
            <person name="Romby P."/>
            <person name="Springer M."/>
            <person name="Marzi S."/>
        </authorList>
    </citation>
    <scope>FUNCTION</scope>
    <scope>MRNA-BINDING</scope>
</reference>
<reference key="12">
    <citation type="journal article" date="2014" name="Curr. Opin. Struct. Biol.">
        <title>A new system for naming ribosomal proteins.</title>
        <authorList>
            <person name="Ban N."/>
            <person name="Beckmann R."/>
            <person name="Cate J.H.D."/>
            <person name="Dinman J.D."/>
            <person name="Dragon F."/>
            <person name="Ellis S.R."/>
            <person name="Lafontaine D.L.J."/>
            <person name="Lindahl L."/>
            <person name="Liljas A."/>
            <person name="Lipton J.M."/>
            <person name="McAlear M.A."/>
            <person name="Moore P.B."/>
            <person name="Noller H.F."/>
            <person name="Ortega J."/>
            <person name="Panse V.G."/>
            <person name="Ramakrishnan V."/>
            <person name="Spahn C.M.T."/>
            <person name="Steitz T.A."/>
            <person name="Tchorzewski M."/>
            <person name="Tollervey D."/>
            <person name="Warren A.J."/>
            <person name="Williamson J.R."/>
            <person name="Wilson D."/>
            <person name="Yonath A."/>
            <person name="Yusupov M."/>
        </authorList>
    </citation>
    <scope>NOMENCLATURE</scope>
</reference>
<reference key="13">
    <citation type="journal article" date="2002" name="Nat. Struct. Biol.">
        <title>All-atom homology model of the Escherichia coli 30S ribosomal subunit.</title>
        <authorList>
            <person name="Tung C.-S."/>
            <person name="Joseph S."/>
            <person name="Sanbonmatsu K.Y."/>
        </authorList>
    </citation>
    <scope>3D-STRUCTURE MODELING</scope>
    <scope>SUBUNIT</scope>
</reference>
<reference key="14">
    <citation type="journal article" date="2003" name="Cell">
        <title>Study of the structural dynamics of the E. coli 70S ribosome using real-space refinement.</title>
        <authorList>
            <person name="Gao H."/>
            <person name="Sengupta J."/>
            <person name="Valle M."/>
            <person name="Korostelev A."/>
            <person name="Eswar N."/>
            <person name="Stagg S.M."/>
            <person name="Van Roey P."/>
            <person name="Agrawal R.K."/>
            <person name="Harvey S.C."/>
            <person name="Sali A."/>
            <person name="Chapman M.S."/>
            <person name="Frank J."/>
        </authorList>
    </citation>
    <scope>STRUCTURE BY ELECTRON MICROSCOPY (11.50 ANGSTROMS)</scope>
    <scope>FUNCTION</scope>
    <scope>SUBUNIT</scope>
    <scope>INTERSUBUNIT BRIDGE FORMATION</scope>
    <scope>RNA-BINDING</scope>
    <source>
        <strain>MRE-600</strain>
    </source>
</reference>
<reference key="15">
    <citation type="journal article" date="2005" name="Science">
        <title>Structures of the bacterial ribosome at 3.5 A resolution.</title>
        <authorList>
            <person name="Schuwirth B.S."/>
            <person name="Borovinskaya M.A."/>
            <person name="Hau C.W."/>
            <person name="Zhang W."/>
            <person name="Vila-Sanjurjo A."/>
            <person name="Holton J.M."/>
            <person name="Cate J.H.D."/>
        </authorList>
    </citation>
    <scope>X-RAY CRYSTALLOGRAPHY (3.46 ANGSTROMS) OF 2 DIFFERENT RIBOSOME STRUCTURES INCLUDING THE INTERSUBUNIT BRIDGE</scope>
    <scope>FUNCTION</scope>
    <scope>SUBUNIT</scope>
    <scope>RNA-BINDING</scope>
    <source>
        <strain>MRE-600</strain>
    </source>
</reference>
<reference key="16">
    <citation type="journal article" date="2017" name="Nature">
        <title>Mechanistic insights into the alternative translation termination by ArfA and RF2.</title>
        <authorList>
            <person name="Ma C."/>
            <person name="Kurita D."/>
            <person name="Li N."/>
            <person name="Chen Y."/>
            <person name="Himeno H."/>
            <person name="Gao N."/>
        </authorList>
    </citation>
    <scope>STRUCTURE BY ELECTRON MICROSCOPY (3.0 ANGSTROMS) OF 70S RIBOSOME IN COMPLEX WITH ARFA AND RF2</scope>
    <scope>SUBUNIT</scope>
</reference>
<reference key="17">
    <citation type="journal article" date="2017" name="Nature">
        <title>Structural basis for ArfA-RF2-mediated translation termination on mRNAs lacking stop codons.</title>
        <authorList>
            <person name="Huter P."/>
            <person name="Mueller C."/>
            <person name="Beckert B."/>
            <person name="Arenz S."/>
            <person name="Berninghausen O."/>
            <person name="Beckmann R."/>
            <person name="Wilson D.N."/>
        </authorList>
    </citation>
    <scope>STRUCTURE BY ELECTRON MICROSCOPY (3.1 ANGSTROMS) OF 70S RIBOSOME IN COMPLEX WITH ARFA AND RF2</scope>
    <scope>SUBUNIT</scope>
</reference>
<reference key="18">
    <citation type="journal article" date="2016" name="Science">
        <title>Translational termination without a stop codon.</title>
        <authorList>
            <person name="James N.R."/>
            <person name="Brown A."/>
            <person name="Gordiyenko Y."/>
            <person name="Ramakrishnan V."/>
        </authorList>
    </citation>
    <scope>STRUCTURE BY ELECTRON MICROSCOPY (2.97 ANGSTROMS) OF 70S RIBOSOME IN COMPLEX WITH ARFA AND RF2</scope>
    <scope>SUBUNIT</scope>
</reference>
<reference key="19">
    <citation type="journal article" date="2017" name="Nature">
        <title>Structural basis of co-translational quality control by ArfA and RF2 bound to ribosome.</title>
        <authorList>
            <person name="Zeng F."/>
            <person name="Chen Y."/>
            <person name="Remis J."/>
            <person name="Shekhar M."/>
            <person name="Phillips J.C."/>
            <person name="Tajkhorshid E."/>
            <person name="Jin H."/>
        </authorList>
    </citation>
    <scope>STRUCTURE BY ELECTRON MICROSCOPY (3.52 ANGSTROMS) OF 70S RIBOSOME IN COMPLEX WITH ARFA AND RF2</scope>
    <scope>SUBUNIT</scope>
</reference>